<dbReference type="EMBL" id="U62549">
    <property type="protein sequence ID" value="AAB04996.1"/>
    <property type="molecule type" value="mRNA"/>
</dbReference>
<dbReference type="EMBL" id="U62550">
    <property type="protein sequence ID" value="AAB04997.1"/>
    <property type="molecule type" value="mRNA"/>
</dbReference>
<dbReference type="EMBL" id="X99061">
    <property type="protein sequence ID" value="CAA67508.1"/>
    <property type="molecule type" value="Genomic_DNA"/>
</dbReference>
<dbReference type="EMBL" id="U43397">
    <property type="protein sequence ID" value="AAD09837.1"/>
    <property type="molecule type" value="mRNA"/>
</dbReference>
<dbReference type="EMBL" id="AY057440">
    <property type="protein sequence ID" value="AAL16377.1"/>
    <property type="molecule type" value="mRNA"/>
</dbReference>
<dbReference type="EMBL" id="AY057441">
    <property type="protein sequence ID" value="AAL16378.1"/>
    <property type="molecule type" value="Genomic_DNA"/>
</dbReference>
<dbReference type="EMBL" id="AY057442">
    <property type="protein sequence ID" value="AAL16379.1"/>
    <property type="molecule type" value="Genomic_DNA"/>
</dbReference>
<dbReference type="EMBL" id="EU351967">
    <property type="protein sequence ID" value="ABY77601.1"/>
    <property type="molecule type" value="Genomic_DNA"/>
</dbReference>
<dbReference type="EMBL" id="EU351968">
    <property type="protein sequence ID" value="ABY77602.1"/>
    <property type="molecule type" value="Genomic_DNA"/>
</dbReference>
<dbReference type="EMBL" id="EU351969">
    <property type="protein sequence ID" value="ABY77603.1"/>
    <property type="molecule type" value="Genomic_DNA"/>
</dbReference>
<dbReference type="EMBL" id="EU351970">
    <property type="protein sequence ID" value="ABY77604.1"/>
    <property type="molecule type" value="Genomic_DNA"/>
</dbReference>
<dbReference type="EMBL" id="EU351971">
    <property type="protein sequence ID" value="ABY77605.1"/>
    <property type="molecule type" value="Genomic_DNA"/>
</dbReference>
<dbReference type="EMBL" id="EU351972">
    <property type="protein sequence ID" value="ABY77606.1"/>
    <property type="molecule type" value="Genomic_DNA"/>
</dbReference>
<dbReference type="EMBL" id="EU351973">
    <property type="protein sequence ID" value="ABY77607.1"/>
    <property type="molecule type" value="Genomic_DNA"/>
</dbReference>
<dbReference type="EMBL" id="EU351974">
    <property type="protein sequence ID" value="ABY77608.1"/>
    <property type="molecule type" value="Genomic_DNA"/>
</dbReference>
<dbReference type="EMBL" id="EU351975">
    <property type="protein sequence ID" value="ABY77609.1"/>
    <property type="molecule type" value="Genomic_DNA"/>
</dbReference>
<dbReference type="EMBL" id="EU351976">
    <property type="protein sequence ID" value="ABY77610.1"/>
    <property type="molecule type" value="Genomic_DNA"/>
</dbReference>
<dbReference type="EMBL" id="EU351977">
    <property type="protein sequence ID" value="ABY77611.1"/>
    <property type="molecule type" value="Genomic_DNA"/>
</dbReference>
<dbReference type="EMBL" id="EU351978">
    <property type="protein sequence ID" value="ABY77612.1"/>
    <property type="molecule type" value="Genomic_DNA"/>
</dbReference>
<dbReference type="EMBL" id="EU351979">
    <property type="protein sequence ID" value="ABY77613.1"/>
    <property type="molecule type" value="Genomic_DNA"/>
</dbReference>
<dbReference type="EMBL" id="EU351980">
    <property type="protein sequence ID" value="ABY77614.1"/>
    <property type="molecule type" value="Genomic_DNA"/>
</dbReference>
<dbReference type="EMBL" id="EU351981">
    <property type="protein sequence ID" value="ABY77615.1"/>
    <property type="molecule type" value="Genomic_DNA"/>
</dbReference>
<dbReference type="EMBL" id="EU351982">
    <property type="protein sequence ID" value="ABY77616.1"/>
    <property type="molecule type" value="Genomic_DNA"/>
</dbReference>
<dbReference type="EMBL" id="EU351983">
    <property type="protein sequence ID" value="ABY77617.1"/>
    <property type="molecule type" value="Genomic_DNA"/>
</dbReference>
<dbReference type="EMBL" id="EU351984">
    <property type="protein sequence ID" value="ABY77618.1"/>
    <property type="molecule type" value="Genomic_DNA"/>
</dbReference>
<dbReference type="EMBL" id="EU351985">
    <property type="protein sequence ID" value="ABY77619.1"/>
    <property type="molecule type" value="Genomic_DNA"/>
</dbReference>
<dbReference type="EMBL" id="EU351986">
    <property type="protein sequence ID" value="ABY77620.1"/>
    <property type="molecule type" value="Genomic_DNA"/>
</dbReference>
<dbReference type="EMBL" id="EU351987">
    <property type="protein sequence ID" value="ABY77621.1"/>
    <property type="molecule type" value="Genomic_DNA"/>
</dbReference>
<dbReference type="EMBL" id="EU351988">
    <property type="protein sequence ID" value="ABY77622.1"/>
    <property type="molecule type" value="Genomic_DNA"/>
</dbReference>
<dbReference type="EMBL" id="EU351989">
    <property type="protein sequence ID" value="ABY77623.1"/>
    <property type="molecule type" value="Genomic_DNA"/>
</dbReference>
<dbReference type="EMBL" id="EU351990">
    <property type="protein sequence ID" value="ABY77624.1"/>
    <property type="molecule type" value="Genomic_DNA"/>
</dbReference>
<dbReference type="EMBL" id="EU351991">
    <property type="protein sequence ID" value="ABY77625.1"/>
    <property type="molecule type" value="Genomic_DNA"/>
</dbReference>
<dbReference type="EMBL" id="EU351993">
    <property type="protein sequence ID" value="ABY77627.1"/>
    <property type="molecule type" value="Genomic_DNA"/>
</dbReference>
<dbReference type="EMBL" id="EU351992">
    <property type="protein sequence ID" value="ABY77626.1"/>
    <property type="molecule type" value="Genomic_DNA"/>
</dbReference>
<dbReference type="EMBL" id="EU351994">
    <property type="protein sequence ID" value="ABY77628.1"/>
    <property type="molecule type" value="Genomic_DNA"/>
</dbReference>
<dbReference type="EMBL" id="EU351995">
    <property type="protein sequence ID" value="ABY77629.1"/>
    <property type="molecule type" value="Genomic_DNA"/>
</dbReference>
<dbReference type="EMBL" id="EU351996">
    <property type="protein sequence ID" value="ABY77630.1"/>
    <property type="molecule type" value="Genomic_DNA"/>
</dbReference>
<dbReference type="EMBL" id="EU351997">
    <property type="protein sequence ID" value="ABY77631.1"/>
    <property type="molecule type" value="Genomic_DNA"/>
</dbReference>
<dbReference type="EMBL" id="EU351998">
    <property type="protein sequence ID" value="ABY77632.1"/>
    <property type="molecule type" value="Genomic_DNA"/>
</dbReference>
<dbReference type="EMBL" id="AC000104">
    <property type="protein sequence ID" value="AAB70435.1"/>
    <property type="molecule type" value="Genomic_DNA"/>
</dbReference>
<dbReference type="EMBL" id="CP002684">
    <property type="protein sequence ID" value="AEE27692.1"/>
    <property type="molecule type" value="Genomic_DNA"/>
</dbReference>
<dbReference type="EMBL" id="CP002684">
    <property type="protein sequence ID" value="AEE27693.1"/>
    <property type="molecule type" value="Genomic_DNA"/>
</dbReference>
<dbReference type="EMBL" id="BT008576">
    <property type="protein sequence ID" value="AAP40403.1"/>
    <property type="molecule type" value="mRNA"/>
</dbReference>
<dbReference type="EMBL" id="BT008648">
    <property type="protein sequence ID" value="AAP40463.1"/>
    <property type="molecule type" value="mRNA"/>
</dbReference>
<dbReference type="EMBL" id="AY576241">
    <property type="protein sequence ID" value="AAT80593.1"/>
    <property type="status" value="ALT_INIT"/>
    <property type="molecule type" value="Genomic_DNA"/>
</dbReference>
<dbReference type="EMBL" id="AY576242">
    <property type="protein sequence ID" value="AAT80594.1"/>
    <property type="status" value="ALT_INIT"/>
    <property type="molecule type" value="Genomic_DNA"/>
</dbReference>
<dbReference type="EMBL" id="AY576243">
    <property type="protein sequence ID" value="AAT80595.1"/>
    <property type="status" value="ALT_INIT"/>
    <property type="molecule type" value="Genomic_DNA"/>
</dbReference>
<dbReference type="EMBL" id="AY576244">
    <property type="protein sequence ID" value="AAT80596.1"/>
    <property type="status" value="ALT_INIT"/>
    <property type="molecule type" value="Genomic_DNA"/>
</dbReference>
<dbReference type="EMBL" id="AY576245">
    <property type="protein sequence ID" value="AAT80597.1"/>
    <property type="status" value="ALT_INIT"/>
    <property type="molecule type" value="Genomic_DNA"/>
</dbReference>
<dbReference type="EMBL" id="AY576246">
    <property type="protein sequence ID" value="AAT80598.1"/>
    <property type="status" value="ALT_INIT"/>
    <property type="molecule type" value="Genomic_DNA"/>
</dbReference>
<dbReference type="EMBL" id="AY576247">
    <property type="protein sequence ID" value="AAT80599.1"/>
    <property type="status" value="ALT_INIT"/>
    <property type="molecule type" value="Genomic_DNA"/>
</dbReference>
<dbReference type="EMBL" id="AY576248">
    <property type="protein sequence ID" value="AAT80600.1"/>
    <property type="status" value="ALT_INIT"/>
    <property type="molecule type" value="Genomic_DNA"/>
</dbReference>
<dbReference type="EMBL" id="AY576249">
    <property type="protein sequence ID" value="AAT80601.1"/>
    <property type="status" value="ALT_INIT"/>
    <property type="molecule type" value="Genomic_DNA"/>
</dbReference>
<dbReference type="EMBL" id="AY576250">
    <property type="protein sequence ID" value="AAT80602.1"/>
    <property type="status" value="ALT_INIT"/>
    <property type="molecule type" value="Genomic_DNA"/>
</dbReference>
<dbReference type="EMBL" id="AY576251">
    <property type="protein sequence ID" value="AAT80603.1"/>
    <property type="status" value="ALT_INIT"/>
    <property type="molecule type" value="Genomic_DNA"/>
</dbReference>
<dbReference type="EMBL" id="AY576252">
    <property type="protein sequence ID" value="AAT80604.1"/>
    <property type="status" value="ALT_INIT"/>
    <property type="molecule type" value="Genomic_DNA"/>
</dbReference>
<dbReference type="EMBL" id="AY576253">
    <property type="protein sequence ID" value="AAT80605.1"/>
    <property type="status" value="ALT_INIT"/>
    <property type="molecule type" value="Genomic_DNA"/>
</dbReference>
<dbReference type="EMBL" id="AY576254">
    <property type="protein sequence ID" value="AAT80606.1"/>
    <property type="status" value="ALT_INIT"/>
    <property type="molecule type" value="Genomic_DNA"/>
</dbReference>
<dbReference type="EMBL" id="AY576255">
    <property type="protein sequence ID" value="AAT80607.1"/>
    <property type="status" value="ALT_INIT"/>
    <property type="molecule type" value="Genomic_DNA"/>
</dbReference>
<dbReference type="EMBL" id="AY576256">
    <property type="protein sequence ID" value="AAT80608.1"/>
    <property type="status" value="ALT_INIT"/>
    <property type="molecule type" value="Genomic_DNA"/>
</dbReference>
<dbReference type="EMBL" id="AY576257">
    <property type="protein sequence ID" value="AAT80609.1"/>
    <property type="status" value="ALT_INIT"/>
    <property type="molecule type" value="Genomic_DNA"/>
</dbReference>
<dbReference type="EMBL" id="AY576258">
    <property type="protein sequence ID" value="AAT80610.1"/>
    <property type="status" value="ALT_INIT"/>
    <property type="molecule type" value="Genomic_DNA"/>
</dbReference>
<dbReference type="EMBL" id="AY576259">
    <property type="protein sequence ID" value="AAT80611.1"/>
    <property type="status" value="ALT_INIT"/>
    <property type="molecule type" value="Genomic_DNA"/>
</dbReference>
<dbReference type="EMBL" id="AY576260">
    <property type="protein sequence ID" value="AAT80612.1"/>
    <property type="status" value="ALT_INIT"/>
    <property type="molecule type" value="Genomic_DNA"/>
</dbReference>
<dbReference type="EMBL" id="AY576261">
    <property type="protein sequence ID" value="AAT80613.1"/>
    <property type="status" value="ALT_INIT"/>
    <property type="molecule type" value="Genomic_DNA"/>
</dbReference>
<dbReference type="EMBL" id="AY576262">
    <property type="protein sequence ID" value="AAT80614.1"/>
    <property type="status" value="ALT_INIT"/>
    <property type="molecule type" value="Genomic_DNA"/>
</dbReference>
<dbReference type="EMBL" id="AY576263">
    <property type="protein sequence ID" value="AAT80615.1"/>
    <property type="status" value="ALT_INIT"/>
    <property type="molecule type" value="Genomic_DNA"/>
</dbReference>
<dbReference type="EMBL" id="AY576264">
    <property type="protein sequence ID" value="AAT80616.1"/>
    <property type="status" value="ALT_INIT"/>
    <property type="molecule type" value="Genomic_DNA"/>
</dbReference>
<dbReference type="EMBL" id="AY576265">
    <property type="protein sequence ID" value="AAT80617.1"/>
    <property type="status" value="ALT_INIT"/>
    <property type="molecule type" value="Genomic_DNA"/>
</dbReference>
<dbReference type="EMBL" id="AY576266">
    <property type="protein sequence ID" value="AAT80618.1"/>
    <property type="status" value="ALT_INIT"/>
    <property type="molecule type" value="Genomic_DNA"/>
</dbReference>
<dbReference type="EMBL" id="AY576267">
    <property type="protein sequence ID" value="AAT80619.1"/>
    <property type="status" value="ALT_INIT"/>
    <property type="molecule type" value="Genomic_DNA"/>
</dbReference>
<dbReference type="EMBL" id="AY576268">
    <property type="protein sequence ID" value="AAT80620.1"/>
    <property type="status" value="ALT_INIT"/>
    <property type="molecule type" value="Genomic_DNA"/>
</dbReference>
<dbReference type="EMBL" id="AY576269">
    <property type="protein sequence ID" value="AAT80621.1"/>
    <property type="status" value="ALT_INIT"/>
    <property type="molecule type" value="Genomic_DNA"/>
</dbReference>
<dbReference type="EMBL" id="AY576270">
    <property type="protein sequence ID" value="AAT80622.1"/>
    <property type="status" value="ALT_INIT"/>
    <property type="molecule type" value="Genomic_DNA"/>
</dbReference>
<dbReference type="EMBL" id="AY576271">
    <property type="protein sequence ID" value="AAT80623.1"/>
    <property type="status" value="ALT_INIT"/>
    <property type="molecule type" value="Genomic_DNA"/>
</dbReference>
<dbReference type="EMBL" id="AK220946">
    <property type="protein sequence ID" value="BAD94467.1"/>
    <property type="status" value="ALT_INIT"/>
    <property type="molecule type" value="mRNA"/>
</dbReference>
<dbReference type="PIR" id="A86176">
    <property type="entry name" value="A86176"/>
</dbReference>
<dbReference type="PIR" id="S71221">
    <property type="entry name" value="S71221"/>
</dbReference>
<dbReference type="RefSeq" id="NP_171935.1">
    <property type="nucleotide sequence ID" value="NM_100320.4"/>
</dbReference>
<dbReference type="RefSeq" id="NP_849588.1">
    <property type="nucleotide sequence ID" value="NM_179257.2"/>
</dbReference>
<dbReference type="PDB" id="6K8I">
    <property type="method" value="X-ray"/>
    <property type="resolution" value="2.70 A"/>
    <property type="chains" value="A/B=1-612"/>
</dbReference>
<dbReference type="PDB" id="6K8K">
    <property type="method" value="X-ray"/>
    <property type="resolution" value="2.50 A"/>
    <property type="chains" value="A/B/D/G=1-612"/>
</dbReference>
<dbReference type="PDB" id="6M79">
    <property type="method" value="EM"/>
    <property type="resolution" value="3.10 A"/>
    <property type="chains" value="A/B/C/D=1-612"/>
</dbReference>
<dbReference type="PDB" id="6X24">
    <property type="method" value="X-ray"/>
    <property type="resolution" value="3.25 A"/>
    <property type="chains" value="A/B/C/D=1-498"/>
</dbReference>
<dbReference type="PDB" id="7X0X">
    <property type="method" value="EM"/>
    <property type="resolution" value="2.56 A"/>
    <property type="chains" value="A/B/C/D=1-612"/>
</dbReference>
<dbReference type="PDB" id="7X0Y">
    <property type="method" value="EM"/>
    <property type="resolution" value="3.89 A"/>
    <property type="chains" value="A/B/C/D=1-612"/>
</dbReference>
<dbReference type="PDBsum" id="6K8I"/>
<dbReference type="PDBsum" id="6K8K"/>
<dbReference type="PDBsum" id="6M79"/>
<dbReference type="PDBsum" id="6X24"/>
<dbReference type="PDBsum" id="7X0X"/>
<dbReference type="PDBsum" id="7X0Y"/>
<dbReference type="EMDB" id="EMD-30128"/>
<dbReference type="EMDB" id="EMD-32928"/>
<dbReference type="EMDB" id="EMD-32929"/>
<dbReference type="SMR" id="Q96524"/>
<dbReference type="BioGRID" id="24764">
    <property type="interactions" value="22"/>
</dbReference>
<dbReference type="DIP" id="DIP-33589N"/>
<dbReference type="FunCoup" id="Q96524">
    <property type="interactions" value="394"/>
</dbReference>
<dbReference type="IntAct" id="Q96524">
    <property type="interactions" value="13"/>
</dbReference>
<dbReference type="STRING" id="3702.Q96524"/>
<dbReference type="iPTMnet" id="Q96524"/>
<dbReference type="PaxDb" id="3702-AT1G04400.1"/>
<dbReference type="ProteomicsDB" id="224501"/>
<dbReference type="EnsemblPlants" id="AT1G04400.1">
    <property type="protein sequence ID" value="AT1G04400.1"/>
    <property type="gene ID" value="AT1G04400"/>
</dbReference>
<dbReference type="EnsemblPlants" id="AT1G04400.2">
    <property type="protein sequence ID" value="AT1G04400.2"/>
    <property type="gene ID" value="AT1G04400"/>
</dbReference>
<dbReference type="GeneID" id="839529"/>
<dbReference type="Gramene" id="AT1G04400.1">
    <property type="protein sequence ID" value="AT1G04400.1"/>
    <property type="gene ID" value="AT1G04400"/>
</dbReference>
<dbReference type="Gramene" id="AT1G04400.2">
    <property type="protein sequence ID" value="AT1G04400.2"/>
    <property type="gene ID" value="AT1G04400"/>
</dbReference>
<dbReference type="KEGG" id="ath:AT1G04400"/>
<dbReference type="Araport" id="AT1G04400"/>
<dbReference type="TAIR" id="AT1G04400">
    <property type="gene designation" value="CRY2"/>
</dbReference>
<dbReference type="eggNOG" id="KOG0133">
    <property type="taxonomic scope" value="Eukaryota"/>
</dbReference>
<dbReference type="HOGENOM" id="CLU_010348_5_0_1"/>
<dbReference type="InParanoid" id="Q96524"/>
<dbReference type="OMA" id="ETLIDWD"/>
<dbReference type="PhylomeDB" id="Q96524"/>
<dbReference type="PRO" id="PR:Q96524"/>
<dbReference type="Proteomes" id="UP000006548">
    <property type="component" value="Chromosome 1"/>
</dbReference>
<dbReference type="ExpressionAtlas" id="Q96524">
    <property type="expression patterns" value="baseline and differential"/>
</dbReference>
<dbReference type="GO" id="GO:0005737">
    <property type="term" value="C:cytoplasm"/>
    <property type="evidence" value="ECO:0000314"/>
    <property type="project" value="UniProtKB"/>
</dbReference>
<dbReference type="GO" id="GO:0016604">
    <property type="term" value="C:nuclear body"/>
    <property type="evidence" value="ECO:0000314"/>
    <property type="project" value="UniProtKB"/>
</dbReference>
<dbReference type="GO" id="GO:0005634">
    <property type="term" value="C:nucleus"/>
    <property type="evidence" value="ECO:0000314"/>
    <property type="project" value="UniProtKB"/>
</dbReference>
<dbReference type="GO" id="GO:0000325">
    <property type="term" value="C:plant-type vacuole"/>
    <property type="evidence" value="ECO:0007005"/>
    <property type="project" value="TAIR"/>
</dbReference>
<dbReference type="GO" id="GO:0005524">
    <property type="term" value="F:ATP binding"/>
    <property type="evidence" value="ECO:0000314"/>
    <property type="project" value="UniProtKB"/>
</dbReference>
<dbReference type="GO" id="GO:0009882">
    <property type="term" value="F:blue light photoreceptor activity"/>
    <property type="evidence" value="ECO:0000250"/>
    <property type="project" value="TAIR"/>
</dbReference>
<dbReference type="GO" id="GO:0071949">
    <property type="term" value="F:FAD binding"/>
    <property type="evidence" value="ECO:0000314"/>
    <property type="project" value="UniProtKB"/>
</dbReference>
<dbReference type="GO" id="GO:0042802">
    <property type="term" value="F:identical protein binding"/>
    <property type="evidence" value="ECO:0000353"/>
    <property type="project" value="IntAct"/>
</dbReference>
<dbReference type="GO" id="GO:0046872">
    <property type="term" value="F:metal ion binding"/>
    <property type="evidence" value="ECO:0007669"/>
    <property type="project" value="UniProtKB-KW"/>
</dbReference>
<dbReference type="GO" id="GO:0042803">
    <property type="term" value="F:protein homodimerization activity"/>
    <property type="evidence" value="ECO:0000353"/>
    <property type="project" value="TAIR"/>
</dbReference>
<dbReference type="GO" id="GO:0009785">
    <property type="term" value="P:blue light signaling pathway"/>
    <property type="evidence" value="ECO:0000316"/>
    <property type="project" value="TAIR"/>
</dbReference>
<dbReference type="GO" id="GO:0006325">
    <property type="term" value="P:chromatin organization"/>
    <property type="evidence" value="ECO:0000315"/>
    <property type="project" value="TAIR"/>
</dbReference>
<dbReference type="GO" id="GO:0006338">
    <property type="term" value="P:chromatin remodeling"/>
    <property type="evidence" value="ECO:0000315"/>
    <property type="project" value="TAIR"/>
</dbReference>
<dbReference type="GO" id="GO:0010617">
    <property type="term" value="P:circadian regulation of calcium ion oscillation"/>
    <property type="evidence" value="ECO:0000315"/>
    <property type="project" value="TAIR"/>
</dbReference>
<dbReference type="GO" id="GO:0007623">
    <property type="term" value="P:circadian rhythm"/>
    <property type="evidence" value="ECO:0000270"/>
    <property type="project" value="UniProtKB"/>
</dbReference>
<dbReference type="GO" id="GO:0051607">
    <property type="term" value="P:defense response to virus"/>
    <property type="evidence" value="ECO:0000315"/>
    <property type="project" value="UniProtKB"/>
</dbReference>
<dbReference type="GO" id="GO:0072387">
    <property type="term" value="P:flavin adenine dinucleotide metabolic process"/>
    <property type="evidence" value="ECO:0000315"/>
    <property type="project" value="UniProtKB"/>
</dbReference>
<dbReference type="GO" id="GO:0048574">
    <property type="term" value="P:long-day photoperiodism, flowering"/>
    <property type="evidence" value="ECO:0000315"/>
    <property type="project" value="UniProtKB"/>
</dbReference>
<dbReference type="GO" id="GO:0009638">
    <property type="term" value="P:phototropism"/>
    <property type="evidence" value="ECO:0000315"/>
    <property type="project" value="UniProtKB"/>
</dbReference>
<dbReference type="GO" id="GO:0009911">
    <property type="term" value="P:positive regulation of flower development"/>
    <property type="evidence" value="ECO:0000315"/>
    <property type="project" value="TAIR"/>
</dbReference>
<dbReference type="GO" id="GO:2000379">
    <property type="term" value="P:positive regulation of reactive oxygen species metabolic process"/>
    <property type="evidence" value="ECO:0000314"/>
    <property type="project" value="UniProtKB"/>
</dbReference>
<dbReference type="GO" id="GO:0042752">
    <property type="term" value="P:regulation of circadian rhythm"/>
    <property type="evidence" value="ECO:0000315"/>
    <property type="project" value="UniProtKB"/>
</dbReference>
<dbReference type="GO" id="GO:0009909">
    <property type="term" value="P:regulation of flower development"/>
    <property type="evidence" value="ECO:0000314"/>
    <property type="project" value="TAIR"/>
</dbReference>
<dbReference type="GO" id="GO:1901371">
    <property type="term" value="P:regulation of leaf morphogenesis"/>
    <property type="evidence" value="ECO:0000315"/>
    <property type="project" value="UniProtKB"/>
</dbReference>
<dbReference type="GO" id="GO:0010075">
    <property type="term" value="P:regulation of meristem growth"/>
    <property type="evidence" value="ECO:0000316"/>
    <property type="project" value="TAIR"/>
</dbReference>
<dbReference type="GO" id="GO:2000028">
    <property type="term" value="P:regulation of photoperiodism, flowering"/>
    <property type="evidence" value="ECO:0000314"/>
    <property type="project" value="UniProtKB"/>
</dbReference>
<dbReference type="GO" id="GO:0009646">
    <property type="term" value="P:response to absence of light"/>
    <property type="evidence" value="ECO:0000270"/>
    <property type="project" value="UniProtKB"/>
</dbReference>
<dbReference type="GO" id="GO:0009637">
    <property type="term" value="P:response to blue light"/>
    <property type="evidence" value="ECO:0000314"/>
    <property type="project" value="UniProtKB"/>
</dbReference>
<dbReference type="GO" id="GO:0009416">
    <property type="term" value="P:response to light stimulus"/>
    <property type="evidence" value="ECO:0000315"/>
    <property type="project" value="UniProtKB"/>
</dbReference>
<dbReference type="GO" id="GO:0010244">
    <property type="term" value="P:response to low fluence blue light stimulus by blue low-fluence system"/>
    <property type="evidence" value="ECO:0000315"/>
    <property type="project" value="UniProtKB"/>
</dbReference>
<dbReference type="GO" id="GO:1902347">
    <property type="term" value="P:response to strigolactone"/>
    <property type="evidence" value="ECO:0000315"/>
    <property type="project" value="UniProtKB"/>
</dbReference>
<dbReference type="GO" id="GO:0009414">
    <property type="term" value="P:response to water deprivation"/>
    <property type="evidence" value="ECO:0000316"/>
    <property type="project" value="TAIR"/>
</dbReference>
<dbReference type="GO" id="GO:0010118">
    <property type="term" value="P:stomatal movement"/>
    <property type="evidence" value="ECO:0000316"/>
    <property type="project" value="TAIR"/>
</dbReference>
<dbReference type="FunFam" id="3.40.50.620:FF:000193">
    <property type="entry name" value="Cryptochrome 1"/>
    <property type="match status" value="1"/>
</dbReference>
<dbReference type="FunFam" id="1.10.579.10:FF:000003">
    <property type="entry name" value="Deoxyribodipyrimidine photo-lyase"/>
    <property type="match status" value="1"/>
</dbReference>
<dbReference type="Gene3D" id="1.25.40.80">
    <property type="match status" value="1"/>
</dbReference>
<dbReference type="Gene3D" id="1.10.579.10">
    <property type="entry name" value="DNA Cyclobutane Dipyrimidine Photolyase, subunit A, domain 3"/>
    <property type="match status" value="1"/>
</dbReference>
<dbReference type="Gene3D" id="3.40.50.620">
    <property type="entry name" value="HUPs"/>
    <property type="match status" value="1"/>
</dbReference>
<dbReference type="InterPro" id="IPR036134">
    <property type="entry name" value="Crypto/Photolyase_FAD-like_sf"/>
</dbReference>
<dbReference type="InterPro" id="IPR036155">
    <property type="entry name" value="Crypto/Photolyase_N_sf"/>
</dbReference>
<dbReference type="InterPro" id="IPR005101">
    <property type="entry name" value="Cryptochr/Photolyase_FAD-bd"/>
</dbReference>
<dbReference type="InterPro" id="IPR002081">
    <property type="entry name" value="Cryptochrome/DNA_photolyase_1"/>
</dbReference>
<dbReference type="InterPro" id="IPR014134">
    <property type="entry name" value="Cryptochrome_pln"/>
</dbReference>
<dbReference type="InterPro" id="IPR018394">
    <property type="entry name" value="DNA_photolyase_1_CS_C"/>
</dbReference>
<dbReference type="InterPro" id="IPR006050">
    <property type="entry name" value="DNA_photolyase_N"/>
</dbReference>
<dbReference type="InterPro" id="IPR014729">
    <property type="entry name" value="Rossmann-like_a/b/a_fold"/>
</dbReference>
<dbReference type="NCBIfam" id="TIGR02766">
    <property type="entry name" value="crypt_chrom_pln"/>
    <property type="match status" value="1"/>
</dbReference>
<dbReference type="PANTHER" id="PTHR11455">
    <property type="entry name" value="CRYPTOCHROME"/>
    <property type="match status" value="1"/>
</dbReference>
<dbReference type="PANTHER" id="PTHR11455:SF18">
    <property type="entry name" value="SI:CH1073-390K14.1"/>
    <property type="match status" value="1"/>
</dbReference>
<dbReference type="Pfam" id="PF00875">
    <property type="entry name" value="DNA_photolyase"/>
    <property type="match status" value="1"/>
</dbReference>
<dbReference type="Pfam" id="PF03441">
    <property type="entry name" value="FAD_binding_7"/>
    <property type="match status" value="1"/>
</dbReference>
<dbReference type="PRINTS" id="PR00147">
    <property type="entry name" value="DNAPHOTLYASE"/>
</dbReference>
<dbReference type="SUPFAM" id="SSF48173">
    <property type="entry name" value="Cryptochrome/photolyase FAD-binding domain"/>
    <property type="match status" value="1"/>
</dbReference>
<dbReference type="SUPFAM" id="SSF52425">
    <property type="entry name" value="Cryptochrome/photolyase, N-terminal domain"/>
    <property type="match status" value="1"/>
</dbReference>
<dbReference type="PROSITE" id="PS00394">
    <property type="entry name" value="DNA_PHOTOLYASES_1_1"/>
    <property type="match status" value="1"/>
</dbReference>
<dbReference type="PROSITE" id="PS00691">
    <property type="entry name" value="DNA_PHOTOLYASES_1_2"/>
    <property type="match status" value="1"/>
</dbReference>
<dbReference type="PROSITE" id="PS51645">
    <property type="entry name" value="PHR_CRY_ALPHA_BETA"/>
    <property type="match status" value="1"/>
</dbReference>
<accession>Q96524</accession>
<accession>B0LQ23</accession>
<accession>B0LQ24</accession>
<accession>B0LQ25</accession>
<accession>B0LQ29</accession>
<accession>Q42549</accession>
<accession>Q42603</accession>
<accession>Q42604</accession>
<accession>Q56ZL8</accession>
<accession>Q696X6</accession>
<accession>Q696X8</accession>
<accession>Q696Z7</accession>
<accession>Q697A2</accession>
<accession>Q8VWL9</accession>
<accession>Q8VZY9</accession>
<name>CRY2_ARATH</name>
<evidence type="ECO:0000250" key="1"/>
<evidence type="ECO:0000250" key="2">
    <source>
        <dbReference type="UniProtKB" id="Q43125"/>
    </source>
</evidence>
<evidence type="ECO:0000255" key="3"/>
<evidence type="ECO:0000255" key="4">
    <source>
        <dbReference type="PROSITE-ProRule" id="PRU00768"/>
    </source>
</evidence>
<evidence type="ECO:0000256" key="5">
    <source>
        <dbReference type="SAM" id="MobiDB-lite"/>
    </source>
</evidence>
<evidence type="ECO:0000269" key="6">
    <source>
    </source>
</evidence>
<evidence type="ECO:0000269" key="7">
    <source>
    </source>
</evidence>
<evidence type="ECO:0000269" key="8">
    <source>
    </source>
</evidence>
<evidence type="ECO:0000269" key="9">
    <source>
    </source>
</evidence>
<evidence type="ECO:0000269" key="10">
    <source>
    </source>
</evidence>
<evidence type="ECO:0000269" key="11">
    <source>
    </source>
</evidence>
<evidence type="ECO:0000269" key="12">
    <source>
    </source>
</evidence>
<evidence type="ECO:0000269" key="13">
    <source>
    </source>
</evidence>
<evidence type="ECO:0000269" key="14">
    <source>
    </source>
</evidence>
<evidence type="ECO:0000269" key="15">
    <source>
    </source>
</evidence>
<evidence type="ECO:0000269" key="16">
    <source>
    </source>
</evidence>
<evidence type="ECO:0000269" key="17">
    <source>
    </source>
</evidence>
<evidence type="ECO:0000269" key="18">
    <source>
    </source>
</evidence>
<evidence type="ECO:0000269" key="19">
    <source>
    </source>
</evidence>
<evidence type="ECO:0000269" key="20">
    <source>
    </source>
</evidence>
<evidence type="ECO:0000269" key="21">
    <source>
    </source>
</evidence>
<evidence type="ECO:0000269" key="22">
    <source>
    </source>
</evidence>
<evidence type="ECO:0000269" key="23">
    <source>
    </source>
</evidence>
<evidence type="ECO:0000269" key="24">
    <source>
    </source>
</evidence>
<evidence type="ECO:0000269" key="25">
    <source>
    </source>
</evidence>
<evidence type="ECO:0000269" key="26">
    <source>
    </source>
</evidence>
<evidence type="ECO:0000269" key="27">
    <source>
    </source>
</evidence>
<evidence type="ECO:0000269" key="28">
    <source>
    </source>
</evidence>
<evidence type="ECO:0000269" key="29">
    <source>
    </source>
</evidence>
<evidence type="ECO:0000269" key="30">
    <source>
    </source>
</evidence>
<evidence type="ECO:0000269" key="31">
    <source>
    </source>
</evidence>
<evidence type="ECO:0000269" key="32">
    <source>
    </source>
</evidence>
<evidence type="ECO:0000269" key="33">
    <source>
    </source>
</evidence>
<evidence type="ECO:0000269" key="34">
    <source>
    </source>
</evidence>
<evidence type="ECO:0000269" key="35">
    <source>
    </source>
</evidence>
<evidence type="ECO:0000269" key="36">
    <source>
    </source>
</evidence>
<evidence type="ECO:0000269" key="37">
    <source>
    </source>
</evidence>
<evidence type="ECO:0000269" key="38">
    <source>
    </source>
</evidence>
<evidence type="ECO:0000269" key="39">
    <source>
    </source>
</evidence>
<evidence type="ECO:0000269" key="40">
    <source>
    </source>
</evidence>
<evidence type="ECO:0000269" key="41">
    <source>
    </source>
</evidence>
<evidence type="ECO:0000269" key="42">
    <source>
    </source>
</evidence>
<evidence type="ECO:0000269" key="43">
    <source>
    </source>
</evidence>
<evidence type="ECO:0000269" key="44">
    <source>
    </source>
</evidence>
<evidence type="ECO:0000269" key="45">
    <source>
    </source>
</evidence>
<evidence type="ECO:0000269" key="46">
    <source>
    </source>
</evidence>
<evidence type="ECO:0000269" key="47">
    <source>
    </source>
</evidence>
<evidence type="ECO:0000269" key="48">
    <source>
    </source>
</evidence>
<evidence type="ECO:0000269" key="49">
    <source>
    </source>
</evidence>
<evidence type="ECO:0000269" key="50">
    <source>
    </source>
</evidence>
<evidence type="ECO:0000269" key="51">
    <source>
    </source>
</evidence>
<evidence type="ECO:0000269" key="52">
    <source>
    </source>
</evidence>
<evidence type="ECO:0000269" key="53">
    <source>
    </source>
</evidence>
<evidence type="ECO:0000269" key="54">
    <source>
    </source>
</evidence>
<evidence type="ECO:0000269" key="55">
    <source>
    </source>
</evidence>
<evidence type="ECO:0000269" key="56">
    <source>
    </source>
</evidence>
<evidence type="ECO:0000303" key="57">
    <source>
    </source>
</evidence>
<evidence type="ECO:0000303" key="58">
    <source>
    </source>
</evidence>
<evidence type="ECO:0000303" key="59">
    <source>
    </source>
</evidence>
<evidence type="ECO:0000303" key="60">
    <source>
    </source>
</evidence>
<evidence type="ECO:0000303" key="61">
    <source ref="2"/>
</evidence>
<evidence type="ECO:0000305" key="62"/>
<evidence type="ECO:0000305" key="63">
    <source>
    </source>
</evidence>
<evidence type="ECO:0000305" key="64">
    <source>
    </source>
</evidence>
<evidence type="ECO:0000312" key="65">
    <source>
        <dbReference type="Araport" id="AT1G04400"/>
    </source>
</evidence>
<evidence type="ECO:0000312" key="66">
    <source>
        <dbReference type="EMBL" id="AAB70435.1"/>
    </source>
</evidence>
<evidence type="ECO:0007744" key="67">
    <source>
        <dbReference type="PDB" id="6K8I"/>
    </source>
</evidence>
<evidence type="ECO:0007744" key="68">
    <source>
        <dbReference type="PDB" id="6K8K"/>
    </source>
</evidence>
<evidence type="ECO:0007829" key="69">
    <source>
        <dbReference type="PDB" id="6K8K"/>
    </source>
</evidence>
<evidence type="ECO:0007829" key="70">
    <source>
        <dbReference type="PDB" id="6M79"/>
    </source>
</evidence>
<evidence type="ECO:0007829" key="71">
    <source>
        <dbReference type="PDB" id="6X24"/>
    </source>
</evidence>
<comment type="function">
    <text evidence="13 14 15 16 18 21 24 26 28 29 30 33 37 38 41 42 45 48 49 50 54 55 58">Photoreceptor that mediates primarily blue light inhibition of hypocotyl elongation and photoperiodic control of floral initiation, and regulates other light responses, including circadian rhythms, tropic growth, stomata opening, guard cell development, root development, bacterial and viral pathogen responses, abiotic stress responses, cell cycles, programmed cell death, apical dominance, fruit and ovule development, seed dormancy, and magnetoreception. Photoexcited cryptochromes interact with signaling partner proteins to alter gene expression at both transcriptional and post-translational levels and, consequently, regulate the corresponding metabolic and developmental programs (PubMed:21841916). Blue-light absorbing flavoprotein that activates reversible flavin photoreduction via an electron transport chain comprising a tryptophan triad (W-321, W-374 and W-397), or via an alternative electron transport that involves small metabolites, including NADPH, NADH, and ATP. The half-life of the activated signaling state is about 16 minutes (PubMed:23398192, PubMed:25428980). Perceives low blue light (LBL) and responds by directly contacting two bHLH transcription factors, PIF4 and PIF5, at chromatin on E-box variant 5'-CA[CT]GTG-3' to promote their activity and stimulate specific gene expression to adapt global physiology (e.g. hypocotyl elongation and hyponastic growth in low blue light) (PubMed:19558423, PubMed:26724867). In response to blue light, binds to CIB proteins (e.g. BHLH63/CIB1 and BHLH76/CIB5) to activate transcription and floral initiation (PubMed:24130508). Mediates blue light-induced gene expression, floral initiation and hypocotyl elongation through the interaction with SPA1 that prevents formation of SPA1/COP1 complex but stimulates COP1 binding, and thus inhibits COP1-mediated degradation of transcription factors (e.g. CO and HY5) (PubMed:16093319, PubMed:21511872, PubMed:21514160). Promotes flowering time in continuous light (LL) (PubMed:21296763). Involved in shortening the circadian clock period, especially at 27 degrees Celsius, in blue light (BL). Required to maintain clock genes expression rhythm (PubMed:23511208). Triggers nuclear accumulation of ROS in response to blue light illumination (PubMed:26179959). Involved in blue light-dependent stomatal opening, transpiration and inhibition of stem and root growth, probably by regulating abscisic acid (ABA) (PubMed:16093319, PubMed:16703358, PubMed:22147516, PubMed:9482948, PubMed:9565033). Regulates the timing of flowering by promoting the expression of 'FLOWERING LOCUS T' (FT) in vascular bundles. Negatively regulated by 'FLOWERING LOCUS C' (FLC) (PubMed:14605222, PubMed:17259260). General positive regulator of reversible low light-induced chromatin decompaction (PubMed:20935177). Involved in triggering chromatin decondensation during floral transition (PubMed:17470059). Together with phototropins, involved in phototropism regulation by various blue light fluence; blue light attenuates phototropism in high fluence rates (100 umol.m-2.s-1) but enhances phototropism in low fluence rates (&lt;1.0 umol.m-2.s-1) (PubMed:12857830). The effect of near-null magnetic field on flowering is altered by changes of blue light cycle and intensity in a CRY1/CRY2-dependent manner (PubMed:26095447). Involved in the strigolactone signaling that regulates hypocotyl growth in response to blue light (PubMed:24126495).</text>
</comment>
<comment type="function">
    <text evidence="25">Confers resistance to turnip crinkle virus (TCV) by preventing COP1-mediated proteasome-mediated degradation of RPP8/HRT, thus promoting its stability in light. Exposure to darkness or blue-light induces degradation of CRY2, and in turn of RPP8/HRT, resulting in susceptibility to TCV.</text>
</comment>
<comment type="cofactor">
    <cofactor evidence="17 19">
        <name>FAD</name>
        <dbReference type="ChEBI" id="CHEBI:57692"/>
    </cofactor>
    <text evidence="17 19 45">Binds 1 FAD per subunit. The flavin in the dark is in the oxidized (bright yellow) redox state, whereas it becomes reduced subsequent to light activation and formation of the neutral radical (pale yellow).</text>
</comment>
<comment type="cofactor">
    <cofactor evidence="1">
        <name>(6R)-5,10-methylene-5,6,7,8-tetrahydrofolate</name>
        <dbReference type="ChEBI" id="CHEBI:15636"/>
    </cofactor>
    <text evidence="1">Binds 1 5,10-methenyltetrahydrofolate (MTHF) per subunit.</text>
</comment>
<comment type="subunit">
    <text evidence="7 9 17 20 23 25 29 30 32 35 42 44 50 51 52">Homodimer (PubMed:11089975, PubMed:11509693, PubMed:17438275, PubMed:27846570). Blue-light dependent dimerization (PubMed:27846570). Interacts with COP1 and PHYB in the nucleus (PubMed:11089975, PubMed:11509693, PubMed:17438275, PubMed:20624951). Binds reversibly to CIBs proteins such as BHLH63/CIB1, BHLH78/CIB2, BHLH74/CIB4 and BHLH76/CIB5 after blue light illumination to stimulate their transcription factor activities (PubMed:18988809, PubMed:22139370, PubMed:24130508, PubMed:24780222). Interacts with PIF4 and PIF5 in the nucleus in response to low blue light (LBL) (PubMed:26724867). Binds to SPA1 in response to blue light, this interaction prevents SPA1/COP1 complex formation but stimulates interaction with COP1, and thus avoid COP1-dependent degradation of the transcription factors CO and HY5 by the proteasome and promotes hypocotyl elongation and floral initiation (PubMed:21511872, PubMed:21514160, PubMed:22139370, PubMed:22739826). Binding to ATP mediates conformational changes which facilitate flavin binding (PubMed:17073458). Interacts with BIC1 in both darkness and light (PubMed:11089975, PubMed:11509693, PubMed:17073458, PubMed:17438275, PubMed:18988809, PubMed:20624951, PubMed:21511872, PubMed:21514160, PubMed:22139370, PubMed:22739826, PubMed:24130508, PubMed:24780222, PubMed:26724867, PubMed:27846570). Interacts with NRP (PubMed:28633330).</text>
</comment>
<comment type="interaction">
    <interactant intactId="EBI-531555">
        <id>Q96524</id>
    </interactant>
    <interactant intactId="EBI-4469930">
        <id>Q8GY61</id>
        <label>BHLH63</label>
    </interactant>
    <organismsDiffer>false</organismsDiffer>
    <experiments>3</experiments>
</comment>
<comment type="interaction">
    <interactant intactId="EBI-531555">
        <id>Q96524</id>
    </interactant>
    <interactant intactId="EBI-301649">
        <id>P43254</id>
        <label>COP1</label>
    </interactant>
    <organismsDiffer>false</organismsDiffer>
    <experiments>3</experiments>
</comment>
<comment type="interaction">
    <interactant intactId="EBI-531555">
        <id>Q96524</id>
    </interactant>
    <interactant intactId="EBI-531555">
        <id>Q96524</id>
        <label>CRY2</label>
    </interactant>
    <organismsDiffer>false</organismsDiffer>
    <experiments>4</experiments>
</comment>
<comment type="interaction">
    <interactant intactId="EBI-531555">
        <id>Q96524</id>
    </interactant>
    <interactant intactId="EBI-300727">
        <id>P14713</id>
        <label>PHYB</label>
    </interactant>
    <organismsDiffer>false</organismsDiffer>
    <experiments>3</experiments>
</comment>
<comment type="subcellular location">
    <subcellularLocation>
        <location evidence="4 6 20 22 23 25 34 35 46 49 50">Nucleus</location>
    </subcellularLocation>
    <subcellularLocation>
        <location evidence="29 39">Nucleus</location>
        <location evidence="29 39">PML body</location>
    </subcellularLocation>
    <subcellularLocation>
        <location evidence="49">Cytoplasm</location>
    </subcellularLocation>
    <text evidence="29 34 39 49">Present in nuclear bodies (NBs) in blue light (e.g. photobodies) (PubMed:21511872, PubMed:22311776, PubMed:23833191). Translocates from the cytosol to the nucleus in response to blue light illumination (PubMed:26179959).</text>
</comment>
<comment type="tissue specificity">
    <text evidence="10">Mostly expressed in the shoot meristems and root tips, and, to a lower extent, in the cotyledons, hypocotyls, and roots.</text>
</comment>
<comment type="induction">
    <text evidence="10 12 25 26 34 35 38 46 50">Daily oscillation of protein abundance in plants grown in short days (SD) but not in long days (LD) (PubMed:12578985). Expression levels display circadian oscillations under constant conditions, with a low amplitude and a late phase, with maximal expression around the end of the light phase. Repressed by light (PubMed:11743105). In response to blue light and darkness, phosphorylated, ubiquitinated, and subsequently degraded (at protein level) in a SPA proteins-dependent manner (PubMed:20624951, PubMed:22311776, PubMed:22739826, PubMed:25792146). Transcripts levels oscillate weakly and proportionally to temperature, but protein levels are stable (PubMed:23511208). Accumulates in response to low blue light (LBL) and in low light (PubMed:20935177, PubMed:26724867).</text>
</comment>
<comment type="domain">
    <text>The NC80 domain (486-565) contains a major active site responsible for the signal transduction processes regulating both hypocotyl inhibition and floral promotion. The C-terminal tail (564-612) is not required for physiological activity of the protein.</text>
</comment>
<comment type="PTM">
    <text evidence="11 17 20 22 40 46 56 58">Phosphorylated by CK1.3 and CK1.4; in response to blue light. Required for degradation (PubMed:12066190, PubMed:17438275, PubMed:17965271, PubMed:23897926, PubMed:25792146, PubMed:9651577). Adopts an open conformation when phosphorylated upon photoexcitation and thus interacts with signaling partner proteins (PubMed:21841916). Not autophosphorylated, even in complex with FAD cofactor (PubMed:17073458).</text>
</comment>
<comment type="PTM">
    <text evidence="22 46">Ubiquitinated; in response to blue light.</text>
</comment>
<comment type="disruption phenotype">
    <text evidence="13 16 24 25 26 28 29 33 38 41 48">Plants show increased root elongation in blue light (PubMed:16703358, PubMed:21511872). Reduced attenuating effect of high fluence rates of blue light in the cry1 cry2 double mutant. Slow rate of curvature at low fluence rates of blue light in cry1 cry2 (PubMed:12857830). The double mutant cry1 cry2 exhibits a reduced impact of near-null magnetic field on flowering in lower blue light intensity and short days (PubMed:26095447). Little detectable phenotype on circadian clock in blue light (BL). The double mutant cry1 cry2 is impaired in blue light signaling, resulting in long-period, lower-amplitude oscillations at 12 and 17 degrees Celsius and completely abolishing rhythms at 27 degrees Celsius (PubMed:23511208). Reduced hyponastic growth (differential growth-driven upward leaf movement) in low blue light fluence (PubMed:19558423). The double mutant cry1 cry2 is hyposensitive to the strigolactone analog GR24 (PubMed:24126495). The mutant cry2 exposed to a background of red light show severely impaired stomatal opening responses to blue light. The double mutant cry1 cry2 has reduced stomatal conductance, transpiration, and photosynthesis, particularly under the high irradiance of full sunlight at midday, associated with elevated abscisic acid levels (PubMed:22147516). Mutation sel20 suppresses the inhibitory effect of continuous light (LL) on the hypocotyl elongation of elf3-1. The double mutant elf3 sel20 exhibits a late-flowering phenotype (PubMed:21296763). Impaired chromatin decondensation during the floral transition and in low light conditions (PubMed:20935177). Increased sensitivity to turnip crinkle virus (TCV) and associated with reduced HRT levels and stability, and characterized by hypersensitive response (HR) symptoms (PubMed:20624951).</text>
</comment>
<comment type="biotechnology">
    <text evidence="27 36 39 43 47">The rapid blue light-mediated reversible interaction between CRY2 and BHLH63/CIB1 is used to design an optogenetic control of target proteins or organelles.</text>
</comment>
<comment type="miscellaneous">
    <text>Phosphorylation of the C-terminal tail and resulting derepression of NC80 domain may both depend on homodimerization.</text>
</comment>
<comment type="similarity">
    <text evidence="62">Belongs to the DNA photolyase class-1 family.</text>
</comment>
<comment type="caution">
    <text evidence="64">Was originally thought to be a DNA photolyase.</text>
</comment>
<comment type="sequence caution" evidence="62">
    <conflict type="erroneous initiation">
        <sequence resource="EMBL-CDS" id="AAT80593"/>
    </conflict>
    <text>Truncated N-terminus.</text>
</comment>
<comment type="sequence caution" evidence="62">
    <conflict type="erroneous initiation">
        <sequence resource="EMBL-CDS" id="AAT80594"/>
    </conflict>
    <text>Truncated N-terminus.</text>
</comment>
<comment type="sequence caution" evidence="62">
    <conflict type="erroneous initiation">
        <sequence resource="EMBL-CDS" id="AAT80595"/>
    </conflict>
    <text>Truncated N-terminus.</text>
</comment>
<comment type="sequence caution" evidence="62">
    <conflict type="erroneous initiation">
        <sequence resource="EMBL-CDS" id="AAT80596"/>
    </conflict>
    <text>Truncated N-terminus.</text>
</comment>
<comment type="sequence caution" evidence="62">
    <conflict type="erroneous initiation">
        <sequence resource="EMBL-CDS" id="AAT80597"/>
    </conflict>
    <text>Truncated N-terminus.</text>
</comment>
<comment type="sequence caution" evidence="62">
    <conflict type="erroneous initiation">
        <sequence resource="EMBL-CDS" id="AAT80598"/>
    </conflict>
    <text>Truncated N-terminus.</text>
</comment>
<comment type="sequence caution" evidence="62">
    <conflict type="erroneous initiation">
        <sequence resource="EMBL-CDS" id="AAT80599"/>
    </conflict>
    <text>Truncated N-terminus.</text>
</comment>
<comment type="sequence caution" evidence="62">
    <conflict type="erroneous initiation">
        <sequence resource="EMBL-CDS" id="AAT80600"/>
    </conflict>
    <text>Truncated N-terminus.</text>
</comment>
<comment type="sequence caution" evidence="62">
    <conflict type="erroneous initiation">
        <sequence resource="EMBL-CDS" id="AAT80601"/>
    </conflict>
    <text>Truncated N-terminus.</text>
</comment>
<comment type="sequence caution" evidence="62">
    <conflict type="erroneous initiation">
        <sequence resource="EMBL-CDS" id="AAT80602"/>
    </conflict>
    <text>Truncated N-terminus.</text>
</comment>
<comment type="sequence caution" evidence="62">
    <conflict type="erroneous initiation">
        <sequence resource="EMBL-CDS" id="AAT80603"/>
    </conflict>
    <text>Truncated N-terminus.</text>
</comment>
<comment type="sequence caution" evidence="62">
    <conflict type="erroneous initiation">
        <sequence resource="EMBL-CDS" id="AAT80604"/>
    </conflict>
    <text>Truncated N-terminus.</text>
</comment>
<comment type="sequence caution" evidence="62">
    <conflict type="erroneous initiation">
        <sequence resource="EMBL-CDS" id="AAT80605"/>
    </conflict>
    <text>Truncated N-terminus.</text>
</comment>
<comment type="sequence caution" evidence="62">
    <conflict type="erroneous initiation">
        <sequence resource="EMBL-CDS" id="AAT80606"/>
    </conflict>
    <text>Truncated N-terminus.</text>
</comment>
<comment type="sequence caution" evidence="62">
    <conflict type="erroneous initiation">
        <sequence resource="EMBL-CDS" id="AAT80607"/>
    </conflict>
    <text>Truncated N-terminus.</text>
</comment>
<comment type="sequence caution" evidence="62">
    <conflict type="erroneous initiation">
        <sequence resource="EMBL-CDS" id="AAT80608"/>
    </conflict>
    <text>Truncated N-terminus.</text>
</comment>
<comment type="sequence caution" evidence="62">
    <conflict type="erroneous initiation">
        <sequence resource="EMBL-CDS" id="AAT80609"/>
    </conflict>
    <text>Truncated N-terminus.</text>
</comment>
<comment type="sequence caution" evidence="62">
    <conflict type="erroneous initiation">
        <sequence resource="EMBL-CDS" id="AAT80610"/>
    </conflict>
    <text>Truncated N-terminus.</text>
</comment>
<comment type="sequence caution" evidence="62">
    <conflict type="erroneous initiation">
        <sequence resource="EMBL-CDS" id="AAT80611"/>
    </conflict>
    <text>Truncated N-terminus.</text>
</comment>
<comment type="sequence caution" evidence="62">
    <conflict type="erroneous initiation">
        <sequence resource="EMBL-CDS" id="AAT80612"/>
    </conflict>
    <text>Truncated N-terminus.</text>
</comment>
<comment type="sequence caution" evidence="62">
    <conflict type="erroneous initiation">
        <sequence resource="EMBL-CDS" id="AAT80613"/>
    </conflict>
    <text>Truncated N-terminus.</text>
</comment>
<comment type="sequence caution" evidence="62">
    <conflict type="erroneous initiation">
        <sequence resource="EMBL-CDS" id="AAT80614"/>
    </conflict>
    <text>Truncated N-terminus.</text>
</comment>
<comment type="sequence caution" evidence="62">
    <conflict type="erroneous initiation">
        <sequence resource="EMBL-CDS" id="AAT80615"/>
    </conflict>
    <text>Truncated N-terminus.</text>
</comment>
<comment type="sequence caution" evidence="62">
    <conflict type="erroneous initiation">
        <sequence resource="EMBL-CDS" id="AAT80616"/>
    </conflict>
    <text>Truncated N-terminus.</text>
</comment>
<comment type="sequence caution" evidence="62">
    <conflict type="erroneous initiation">
        <sequence resource="EMBL-CDS" id="AAT80617"/>
    </conflict>
    <text>Truncated N-terminus.</text>
</comment>
<comment type="sequence caution" evidence="62">
    <conflict type="erroneous initiation">
        <sequence resource="EMBL-CDS" id="AAT80618"/>
    </conflict>
    <text>Truncated N-terminus.</text>
</comment>
<comment type="sequence caution" evidence="62">
    <conflict type="erroneous initiation">
        <sequence resource="EMBL-CDS" id="AAT80619"/>
    </conflict>
    <text>Truncated N-terminus.</text>
</comment>
<comment type="sequence caution" evidence="62">
    <conflict type="erroneous initiation">
        <sequence resource="EMBL-CDS" id="AAT80620"/>
    </conflict>
    <text>Truncated N-terminus.</text>
</comment>
<comment type="sequence caution" evidence="62">
    <conflict type="erroneous initiation">
        <sequence resource="EMBL-CDS" id="AAT80621"/>
    </conflict>
    <text>Truncated N-terminus.</text>
</comment>
<comment type="sequence caution" evidence="62">
    <conflict type="erroneous initiation">
        <sequence resource="EMBL-CDS" id="AAT80622"/>
    </conflict>
    <text>Truncated N-terminus.</text>
</comment>
<comment type="sequence caution" evidence="62">
    <conflict type="erroneous initiation">
        <sequence resource="EMBL-CDS" id="AAT80623"/>
    </conflict>
    <text>Truncated N-terminus.</text>
</comment>
<comment type="sequence caution" evidence="62">
    <conflict type="erroneous initiation">
        <sequence resource="EMBL-CDS" id="BAD94467"/>
    </conflict>
    <text>Truncated N-terminus.</text>
</comment>
<gene>
    <name evidence="61" type="primary">CRY2</name>
    <name evidence="60" type="synonym">PHH1</name>
    <name evidence="57" type="synonym">SEL20</name>
    <name evidence="65" type="ordered locus">At1g04400</name>
    <name evidence="66" type="ORF">F19P19.14</name>
</gene>
<reference key="1">
    <citation type="journal article" date="1996" name="Mol. Gen. Genet.">
        <title>PHH1, a novel gene from Arabidopsis thaliana that encodes a protein similar to plant blue-light photoreceptors and microbial photolyases.</title>
        <authorList>
            <person name="Hoffman P.D."/>
            <person name="Batschauer A."/>
            <person name="Hays J.B."/>
        </authorList>
    </citation>
    <scope>NUCLEOTIDE SEQUENCE [GENOMIC DNA / MRNA]</scope>
    <source>
        <strain>cv. Columbia</strain>
    </source>
</reference>
<reference key="2">
    <citation type="online journal article" date="1996" name="Plant Gene Register">
        <title>CRY2: a second member of the Arabidopsis cryptochrome gene family.</title>
        <authorList>
            <person name="Lin C."/>
            <person name="Ahmad M."/>
            <person name="Chan J."/>
            <person name="Cashmore A.R."/>
        </authorList>
        <locator>PGR96-001</locator>
    </citation>
    <scope>NUCLEOTIDE SEQUENCE [MRNA]</scope>
    <source>
        <strain>cv. Columbia</strain>
    </source>
</reference>
<reference key="3">
    <citation type="journal article" date="2001" name="Nat. Genet.">
        <title>A QTL for flowering time in Arabidopsis reveals a novel allele of CRY2.</title>
        <authorList>
            <person name="El-Din El-Assal S."/>
            <person name="Alonso-Blanco C."/>
            <person name="Peeters A.J.M."/>
            <person name="Raz V."/>
            <person name="Koornneef M."/>
        </authorList>
    </citation>
    <scope>NUCLEOTIDE SEQUENCE [GENOMIC DNA / MRNA]</scope>
    <source>
        <strain>cv. Cvi-0</strain>
        <strain>cv. Landsberg erecta</strain>
    </source>
</reference>
<reference key="4">
    <citation type="journal article" date="2008" name="J. Mol. Evol.">
        <title>Local patterns of nucleotide polymorphism are highly variable in the selfing species Arabidopsis thaliana.</title>
        <authorList>
            <person name="Moore R.C."/>
            <person name="Stevens M.H.H."/>
        </authorList>
    </citation>
    <scope>NUCLEOTIDE SEQUENCE [GENOMIC DNA]</scope>
    <scope>VARIANTS</scope>
    <source>
        <strain>cv. Bla-10</strain>
        <strain>cv. Bsch-0</strain>
        <strain>cv. Bu-0</strain>
        <strain>cv. Bu-2</strain>
        <strain>cv. Chi-1</strain>
        <strain>cv. Co-1</strain>
        <strain>cv. Columbia</strain>
        <strain>cv. Cvi-0</strain>
        <strain>cv. Da(1)-12</strain>
        <strain>cv. Di-G</strain>
        <strain>cv. El-0</strain>
        <strain>cv. Fe-1</strain>
        <strain>cv. Gr-3</strain>
        <strain>cv. Hn-0</strain>
        <strain>cv. Kon</strain>
        <strain>cv. Kr-0</strain>
        <strain>cv. Landsberg erecta</strain>
        <strain>cv. Le-0</strain>
        <strain>cv. Li-3</strain>
        <strain>cv. Lip-0</strain>
        <strain>cv. Lz-0</strain>
        <strain>cv. Mrk-0</strain>
        <strain>cv. Mt-0</strain>
        <strain>cv. Mz-0</strain>
        <strain>cv. Ove-0</strain>
        <strain>cv. PHW-1</strain>
        <strain>cv. PHW-32</strain>
        <strain>cv. PHW-36</strain>
        <strain>cv. Sha</strain>
        <strain>cv. Stw-0</strain>
        <strain>cv. Ta-0</strain>
        <strain>cv. Wassilewskija-3</strain>
    </source>
</reference>
<reference key="5">
    <citation type="journal article" date="2000" name="Nature">
        <title>Sequence and analysis of chromosome 1 of the plant Arabidopsis thaliana.</title>
        <authorList>
            <person name="Theologis A."/>
            <person name="Ecker J.R."/>
            <person name="Palm C.J."/>
            <person name="Federspiel N.A."/>
            <person name="Kaul S."/>
            <person name="White O."/>
            <person name="Alonso J."/>
            <person name="Altafi H."/>
            <person name="Araujo R."/>
            <person name="Bowman C.L."/>
            <person name="Brooks S.Y."/>
            <person name="Buehler E."/>
            <person name="Chan A."/>
            <person name="Chao Q."/>
            <person name="Chen H."/>
            <person name="Cheuk R.F."/>
            <person name="Chin C.W."/>
            <person name="Chung M.K."/>
            <person name="Conn L."/>
            <person name="Conway A.B."/>
            <person name="Conway A.R."/>
            <person name="Creasy T.H."/>
            <person name="Dewar K."/>
            <person name="Dunn P."/>
            <person name="Etgu P."/>
            <person name="Feldblyum T.V."/>
            <person name="Feng J.-D."/>
            <person name="Fong B."/>
            <person name="Fujii C.Y."/>
            <person name="Gill J.E."/>
            <person name="Goldsmith A.D."/>
            <person name="Haas B."/>
            <person name="Hansen N.F."/>
            <person name="Hughes B."/>
            <person name="Huizar L."/>
            <person name="Hunter J.L."/>
            <person name="Jenkins J."/>
            <person name="Johnson-Hopson C."/>
            <person name="Khan S."/>
            <person name="Khaykin E."/>
            <person name="Kim C.J."/>
            <person name="Koo H.L."/>
            <person name="Kremenetskaia I."/>
            <person name="Kurtz D.B."/>
            <person name="Kwan A."/>
            <person name="Lam B."/>
            <person name="Langin-Hooper S."/>
            <person name="Lee A."/>
            <person name="Lee J.M."/>
            <person name="Lenz C.A."/>
            <person name="Li J.H."/>
            <person name="Li Y.-P."/>
            <person name="Lin X."/>
            <person name="Liu S.X."/>
            <person name="Liu Z.A."/>
            <person name="Luros J.S."/>
            <person name="Maiti R."/>
            <person name="Marziali A."/>
            <person name="Militscher J."/>
            <person name="Miranda M."/>
            <person name="Nguyen M."/>
            <person name="Nierman W.C."/>
            <person name="Osborne B.I."/>
            <person name="Pai G."/>
            <person name="Peterson J."/>
            <person name="Pham P.K."/>
            <person name="Rizzo M."/>
            <person name="Rooney T."/>
            <person name="Rowley D."/>
            <person name="Sakano H."/>
            <person name="Salzberg S.L."/>
            <person name="Schwartz J.R."/>
            <person name="Shinn P."/>
            <person name="Southwick A.M."/>
            <person name="Sun H."/>
            <person name="Tallon L.J."/>
            <person name="Tambunga G."/>
            <person name="Toriumi M.J."/>
            <person name="Town C.D."/>
            <person name="Utterback T."/>
            <person name="Van Aken S."/>
            <person name="Vaysberg M."/>
            <person name="Vysotskaia V.S."/>
            <person name="Walker M."/>
            <person name="Wu D."/>
            <person name="Yu G."/>
            <person name="Fraser C.M."/>
            <person name="Venter J.C."/>
            <person name="Davis R.W."/>
        </authorList>
    </citation>
    <scope>NUCLEOTIDE SEQUENCE [LARGE SCALE GENOMIC DNA]</scope>
    <source>
        <strain>cv. Columbia</strain>
    </source>
</reference>
<reference key="6">
    <citation type="journal article" date="2017" name="Plant J.">
        <title>Araport11: a complete reannotation of the Arabidopsis thaliana reference genome.</title>
        <authorList>
            <person name="Cheng C.Y."/>
            <person name="Krishnakumar V."/>
            <person name="Chan A.P."/>
            <person name="Thibaud-Nissen F."/>
            <person name="Schobel S."/>
            <person name="Town C.D."/>
        </authorList>
    </citation>
    <scope>GENOME REANNOTATION</scope>
    <source>
        <strain>cv. Columbia</strain>
    </source>
</reference>
<reference key="7">
    <citation type="journal article" date="2003" name="Science">
        <title>Empirical analysis of transcriptional activity in the Arabidopsis genome.</title>
        <authorList>
            <person name="Yamada K."/>
            <person name="Lim J."/>
            <person name="Dale J.M."/>
            <person name="Chen H."/>
            <person name="Shinn P."/>
            <person name="Palm C.J."/>
            <person name="Southwick A.M."/>
            <person name="Wu H.C."/>
            <person name="Kim C.J."/>
            <person name="Nguyen M."/>
            <person name="Pham P.K."/>
            <person name="Cheuk R.F."/>
            <person name="Karlin-Newmann G."/>
            <person name="Liu S.X."/>
            <person name="Lam B."/>
            <person name="Sakano H."/>
            <person name="Wu T."/>
            <person name="Yu G."/>
            <person name="Miranda M."/>
            <person name="Quach H.L."/>
            <person name="Tripp M."/>
            <person name="Chang C.H."/>
            <person name="Lee J.M."/>
            <person name="Toriumi M.J."/>
            <person name="Chan M.M."/>
            <person name="Tang C.C."/>
            <person name="Onodera C.S."/>
            <person name="Deng J.M."/>
            <person name="Akiyama K."/>
            <person name="Ansari Y."/>
            <person name="Arakawa T."/>
            <person name="Banh J."/>
            <person name="Banno F."/>
            <person name="Bowser L."/>
            <person name="Brooks S.Y."/>
            <person name="Carninci P."/>
            <person name="Chao Q."/>
            <person name="Choy N."/>
            <person name="Enju A."/>
            <person name="Goldsmith A.D."/>
            <person name="Gurjal M."/>
            <person name="Hansen N.F."/>
            <person name="Hayashizaki Y."/>
            <person name="Johnson-Hopson C."/>
            <person name="Hsuan V.W."/>
            <person name="Iida K."/>
            <person name="Karnes M."/>
            <person name="Khan S."/>
            <person name="Koesema E."/>
            <person name="Ishida J."/>
            <person name="Jiang P.X."/>
            <person name="Jones T."/>
            <person name="Kawai J."/>
            <person name="Kamiya A."/>
            <person name="Meyers C."/>
            <person name="Nakajima M."/>
            <person name="Narusaka M."/>
            <person name="Seki M."/>
            <person name="Sakurai T."/>
            <person name="Satou M."/>
            <person name="Tamse R."/>
            <person name="Vaysberg M."/>
            <person name="Wallender E.K."/>
            <person name="Wong C."/>
            <person name="Yamamura Y."/>
            <person name="Yuan S."/>
            <person name="Shinozaki K."/>
            <person name="Davis R.W."/>
            <person name="Theologis A."/>
            <person name="Ecker J.R."/>
        </authorList>
    </citation>
    <scope>NUCLEOTIDE SEQUENCE [LARGE SCALE MRNA]</scope>
    <source>
        <strain>cv. Columbia</strain>
    </source>
</reference>
<reference key="8">
    <citation type="journal article" date="2004" name="Genetics">
        <title>Linkage disequilibrium mapping of Arabidopsis CRY2 flowering time alleles.</title>
        <authorList>
            <person name="Olsen K.M."/>
            <person name="Halldorsdottir S.S."/>
            <person name="Stinchcombe J.R."/>
            <person name="Weinig C."/>
            <person name="Schmitt J."/>
            <person name="Purugganan M.D."/>
        </authorList>
    </citation>
    <scope>NUCLEOTIDE SEQUENCE [GENOMIC DNA] OF 2-612</scope>
    <source>
        <strain>cv. Bla-10</strain>
        <strain>cv. Bsch-0</strain>
        <strain>cv. Bu-0</strain>
        <strain>cv. Bu-2</strain>
        <strain>cv. Chi-1</strain>
        <strain>cv. Co-1</strain>
        <strain>cv. Cvi-0</strain>
        <strain>cv. Da(1)-12</strain>
        <strain>cv. Di-G</strain>
        <strain>cv. El-0</strain>
        <strain>cv. Fe-1</strain>
        <strain>cv. Gr-3</strain>
        <strain>cv. Hn-0</strain>
        <strain>cv. Kon</strain>
        <strain>cv. Kr-0</strain>
        <strain>cv. Landsberg erecta</strain>
        <strain>cv. Le-0</strain>
        <strain>cv. Li-3</strain>
        <strain>cv. Lip-0</strain>
        <strain>cv. Lz-0</strain>
        <strain>cv. Mrk-0</strain>
        <strain>cv. Mt-0</strain>
        <strain>cv. Mz-0</strain>
        <strain>cv. Ove-0</strain>
        <strain>cv. Oy-1</strain>
        <strain>cv. PHW-1</strain>
        <strain>cv. PHW-33</strain>
        <strain>cv. PHW-36</strain>
        <strain>cv. Sha</strain>
        <strain>cv. Stw-0</strain>
        <strain>cv. Ta-0</strain>
    </source>
</reference>
<reference key="9">
    <citation type="submission" date="2005-03" db="EMBL/GenBank/DDBJ databases">
        <title>Large-scale analysis of RIKEN Arabidopsis full-length (RAFL) cDNAs.</title>
        <authorList>
            <person name="Totoki Y."/>
            <person name="Seki M."/>
            <person name="Ishida J."/>
            <person name="Nakajima M."/>
            <person name="Enju A."/>
            <person name="Kamiya A."/>
            <person name="Narusaka M."/>
            <person name="Shin-i T."/>
            <person name="Nakagawa M."/>
            <person name="Sakamoto N."/>
            <person name="Oishi K."/>
            <person name="Kohara Y."/>
            <person name="Kobayashi M."/>
            <person name="Toyoda A."/>
            <person name="Sakaki Y."/>
            <person name="Sakurai T."/>
            <person name="Iida K."/>
            <person name="Akiyama K."/>
            <person name="Satou M."/>
            <person name="Toyoda T."/>
            <person name="Konagaya A."/>
            <person name="Carninci P."/>
            <person name="Kawai J."/>
            <person name="Hayashizaki Y."/>
            <person name="Shinozaki K."/>
        </authorList>
    </citation>
    <scope>NUCLEOTIDE SEQUENCE [LARGE SCALE MRNA] OF 485-612</scope>
    <source>
        <strain>cv. Columbia</strain>
    </source>
</reference>
<reference key="10">
    <citation type="journal article" date="1998" name="Nature">
        <title>Cryptochrome blue-light photoreceptors of Arabidopsis implicated in phototropism.</title>
        <authorList>
            <person name="Ahmad M."/>
            <person name="Jarillo J.A."/>
            <person name="Smirnova O."/>
            <person name="Cashmore A.R."/>
        </authorList>
    </citation>
    <scope>FUNCTION</scope>
    <scope>MUTAGENESIS OF GLY-337</scope>
</reference>
<reference key="11">
    <citation type="journal article" date="1998" name="Mol. Cell">
        <title>The CRY1 blue light photoreceptor of Arabidopsis interacts with phytochrome A in vitro.</title>
        <authorList>
            <person name="Ahmad M."/>
            <person name="Jarillo J.A."/>
            <person name="Smirnova O."/>
            <person name="Cashmore A.R."/>
        </authorList>
    </citation>
    <scope>PHOSPHORYLATION</scope>
</reference>
<reference key="12">
    <citation type="journal article" date="1998" name="Proc. Natl. Acad. Sci. U.S.A.">
        <title>Enhancement of blue-light sensitivity of Arabidopsis seedlings by a blue light receptor cryptochrome 2.</title>
        <authorList>
            <person name="Lin C."/>
            <person name="Yang H."/>
            <person name="Guo H."/>
            <person name="Mockler T."/>
            <person name="Chen J."/>
            <person name="Cashmore A.R."/>
        </authorList>
    </citation>
    <scope>FUNCTION</scope>
</reference>
<reference key="13">
    <citation type="journal article" date="1999" name="Plant J.">
        <title>Nuclear localization of the Arabidopsis blue light receptor cryptochrome 2.</title>
        <authorList>
            <person name="Kleiner O."/>
            <person name="Kircher S."/>
            <person name="Harter K."/>
            <person name="Batschauer A."/>
        </authorList>
    </citation>
    <scope>SUBCELLULAR LOCATION</scope>
</reference>
<reference key="14">
    <citation type="journal article" date="2000" name="Cell">
        <title>The C termini of Arabidopsis cryptochromes mediate a constitutive light response.</title>
        <authorList>
            <person name="Yang H.-Q."/>
            <person name="Wu Y.-J."/>
            <person name="Tang R.-H."/>
            <person name="Liu D."/>
            <person name="Liu Y."/>
            <person name="Cashmore A.R."/>
        </authorList>
    </citation>
    <scope>DOMAINS</scope>
</reference>
<reference key="15">
    <citation type="journal article" date="2000" name="Nature">
        <title>Functional interaction of phytochrome B and cryptochrome 2.</title>
        <authorList>
            <person name="Mas P."/>
            <person name="Devlin P.F."/>
            <person name="Panda S."/>
            <person name="Kay S.A."/>
        </authorList>
    </citation>
    <scope>INTERACTION WITH PHYB</scope>
</reference>
<reference key="16">
    <citation type="journal article" date="2001" name="Plant Physiol.">
        <title>Circadian clock-regulated expression of phytochrome and cryptochrome genes in Arabidopsis.</title>
        <authorList>
            <person name="Toth R."/>
            <person name="Kevei E."/>
            <person name="Hall A."/>
            <person name="Millar A.J."/>
            <person name="Nagy F."/>
            <person name="Kozma-Bognar L."/>
        </authorList>
    </citation>
    <scope>INDUCTION BY CIRCADIAN CLOCK AND LIGHT</scope>
    <scope>TISSUE SPECIFICITY</scope>
</reference>
<reference key="17">
    <citation type="journal article" date="2001" name="Science">
        <title>Direct interaction of Arabidopsis cryptochromes with COP1 in light control development.</title>
        <authorList>
            <person name="Wang H."/>
            <person name="Ma L.-G."/>
            <person name="Li J.-M."/>
            <person name="Zhao H.-Y."/>
            <person name="Deng X.W."/>
        </authorList>
    </citation>
    <scope>INTERACTION WITH COP1</scope>
</reference>
<reference key="18">
    <citation type="journal article" date="2002" name="Nature">
        <title>Regulation of Arabidopsis cryptochrome 2 by blue-light-dependent phosphorylation.</title>
        <authorList>
            <person name="Shalitin D."/>
            <person name="Yang H."/>
            <person name="Mockler T.C."/>
            <person name="Maymon M."/>
            <person name="Guo H."/>
            <person name="Whitelam G.C."/>
            <person name="Lin C."/>
        </authorList>
    </citation>
    <scope>PHOSPHORYLATION</scope>
</reference>
<reference key="19">
    <citation type="journal article" date="2003" name="Plant Physiol.">
        <title>Second positive phototropism results from coordinated co-action of the phototropins and cryptochromes.</title>
        <authorList>
            <person name="Whippo C.W."/>
            <person name="Hangarter R.P."/>
        </authorList>
    </citation>
    <scope>FUNCTION</scope>
    <scope>DISRUPTION PHENOTYPE</scope>
</reference>
<reference key="20">
    <citation type="journal article" date="2003" name="Plant Physiol.">
        <title>The role of cryptochrome 2 in flowering in Arabidopsis.</title>
        <authorList>
            <person name="El-Din El-Assal S."/>
            <person name="Alonso-Blanco C."/>
            <person name="Peeters A.J."/>
            <person name="Wagemaker C."/>
            <person name="Weller J.L."/>
            <person name="Koornneef M."/>
        </authorList>
    </citation>
    <scope>FUNCTION</scope>
</reference>
<reference key="21">
    <citation type="journal article" date="2003" name="Proc. Natl. Acad. Sci. U.S.A.">
        <title>Regulation of photoperiodic flowering by Arabidopsis photoreceptors.</title>
        <authorList>
            <person name="Mockler T."/>
            <person name="Yang H."/>
            <person name="Yu X."/>
            <person name="Parikh D."/>
            <person name="Cheng Y.C."/>
            <person name="Dolan S."/>
            <person name="Lin C."/>
        </authorList>
    </citation>
    <scope>INDUCTION</scope>
</reference>
<reference key="22">
    <citation type="journal article" date="2005" name="Proc. Natl. Acad. Sci. U.S.A.">
        <title>A role for Arabidopsis cryptochromes and COP1 in the regulation of stomatal opening.</title>
        <authorList>
            <person name="Mao J."/>
            <person name="Zhang Y.C."/>
            <person name="Sang Y."/>
            <person name="Li Q.H."/>
            <person name="Yang H.Q."/>
        </authorList>
    </citation>
    <scope>FUNCTION</scope>
</reference>
<reference key="23">
    <citation type="journal article" date="2006" name="Biochemistry">
        <title>Analysis of autophosphorylating kinase activities of Arabidopsis and human cryptochromes.</title>
        <authorList>
            <person name="Ozguer S."/>
            <person name="Sancar A."/>
        </authorList>
    </citation>
    <scope>PTM</scope>
    <scope>COFACTOR</scope>
    <scope>ATP-BINDING</scope>
</reference>
<reference key="24">
    <citation type="journal article" date="2006" name="Planta">
        <title>Cryptochrome photoreceptors cry1 and cry2 antagonistically regulate primary root elongation in Arabidopsis thaliana.</title>
        <authorList>
            <person name="Canamero R.C."/>
            <person name="Bakrim N."/>
            <person name="Bouly J.-P."/>
            <person name="Garay A."/>
            <person name="Dudkin E.E."/>
            <person name="Habricot Y."/>
            <person name="Ahmad M."/>
        </authorList>
    </citation>
    <scope>FUNCTION</scope>
    <scope>DISRUPTION PHENOTYPE</scope>
</reference>
<reference key="25">
    <citation type="journal article" date="2007" name="J. Biol. Chem.">
        <title>The signaling state of Arabidopsis cryptochrome 2 contains flavin semiquinone.</title>
        <authorList>
            <person name="Banerjee R."/>
            <person name="Schleicher E."/>
            <person name="Meier S."/>
            <person name="Viana R.M."/>
            <person name="Pokorny R."/>
            <person name="Ahmad M."/>
            <person name="Bittl R."/>
            <person name="Batschauer A."/>
        </authorList>
    </citation>
    <scope>COFACTOR</scope>
</reference>
<reference key="26">
    <citation type="journal article" date="2007" name="Plant J.">
        <title>Light-regulated large-scale reorganization of chromatin during the floral transition in Arabidopsis.</title>
        <authorList>
            <person name="Tessadori F."/>
            <person name="Schulkes R.K."/>
            <person name="van Driel R."/>
            <person name="Fransz P."/>
        </authorList>
    </citation>
    <scope>FUNCTION</scope>
</reference>
<reference key="27">
    <citation type="journal article" date="2007" name="Proc. Natl. Acad. Sci. U.S.A.">
        <title>Derepression of the NC80 motif is critical for the photoactivation of Arabidopsis CRY2.</title>
        <authorList>
            <person name="Yu X."/>
            <person name="Shalitin D."/>
            <person name="Liu X."/>
            <person name="Maymon M."/>
            <person name="Klejnot J."/>
            <person name="Yang H."/>
            <person name="Lopez J."/>
            <person name="Zhao X."/>
            <person name="Bendehakkalu K.T."/>
            <person name="Lin C."/>
        </authorList>
    </citation>
    <scope>SUBCELLULAR LOCATION</scope>
    <scope>SUBUNIT</scope>
    <scope>PHOSPHORYLATION</scope>
</reference>
<reference key="28">
    <citation type="journal article" date="2007" name="Plant Cell">
        <title>Arabidopsis cryptochrome 2 completes its posttranslational life cycle in the nucleus.</title>
        <authorList>
            <person name="Yu X."/>
            <person name="Klejnot J."/>
            <person name="Zhao X."/>
            <person name="Shalitin D."/>
            <person name="Maymon M."/>
            <person name="Yang H."/>
            <person name="Lee J."/>
            <person name="Liu X."/>
            <person name="Lopez J."/>
            <person name="Lin C."/>
        </authorList>
    </citation>
    <scope>SUBCELLULAR LOCATION</scope>
    <scope>UBIQUITINATION</scope>
    <scope>PHOSPHORYLATION</scope>
</reference>
<reference key="29">
    <citation type="journal article" date="2007" name="Plant Cell">
        <title>CRYPTOCHROME2 in vascular bundles regulates flowering in Arabidopsis.</title>
        <authorList>
            <person name="Endo M."/>
            <person name="Mochizuki N."/>
            <person name="Suzuki T."/>
            <person name="Nagatani A."/>
        </authorList>
    </citation>
    <scope>FUNCTION</scope>
</reference>
<reference key="30">
    <citation type="journal article" date="2008" name="Science">
        <title>Photoexcited CRY2 interacts with CIB1 to regulate transcription and floral initiation in Arabidopsis.</title>
        <authorList>
            <person name="Liu H."/>
            <person name="Yu X."/>
            <person name="Li K."/>
            <person name="Klejnot J."/>
            <person name="Yang H."/>
            <person name="Lisiero D."/>
            <person name="Lin C."/>
        </authorList>
    </citation>
    <scope>INTERACTION WITH BHLH63/CIB1</scope>
    <scope>SUBCELLULAR LOCATION</scope>
    <scope>MUTAGENESIS OF ASP-387</scope>
</reference>
<reference key="31">
    <citation type="journal article" date="2009" name="New Phytol.">
        <title>Differential petiole growth in Arabidopsis thaliana: photocontrol and hormonal regulation.</title>
        <authorList>
            <person name="Millenaar F.F."/>
            <person name="van Zanten M."/>
            <person name="Cox M.C."/>
            <person name="Pierik R."/>
            <person name="Voesenek L.A."/>
            <person name="Peeters A.J."/>
        </authorList>
    </citation>
    <scope>FUNCTION</scope>
    <scope>DISRUPTION PHENOTYPE</scope>
    <source>
        <strain>cv. Columbia</strain>
    </source>
</reference>
<reference key="32">
    <citation type="journal article" date="2010" name="Arabidopsis Book">
        <title>The cryptochrome blue light receptors.</title>
        <authorList>
            <person name="Yu X."/>
            <person name="Liu H."/>
            <person name="Klejnot J."/>
            <person name="Lin C."/>
        </authorList>
    </citation>
    <scope>REVIEW ON CRYPTOCHROMES</scope>
</reference>
<reference key="33">
    <citation type="journal article" date="2010" name="Curr. Top. Dev. Biol.">
        <title>Light-regulated plant growth and development.</title>
        <authorList>
            <person name="Kami C."/>
            <person name="Lorrain S."/>
            <person name="Hornitschek P."/>
            <person name="Fankhauser C."/>
        </authorList>
    </citation>
    <scope>REVIEW ON PHOTORECEPTORS</scope>
</reference>
<reference key="34">
    <citation type="journal article" date="2010" name="Nat. Methods">
        <title>Rapid blue-light-mediated induction of protein interactions in living cells.</title>
        <authorList>
            <person name="Kennedy M.J."/>
            <person name="Hughes R.M."/>
            <person name="Peteya L.A."/>
            <person name="Schwartz J.W."/>
            <person name="Ehlers M.D."/>
            <person name="Tucker C.L."/>
        </authorList>
    </citation>
    <scope>BIOTECHNOLOGY</scope>
</reference>
<reference key="35">
    <citation type="journal article" date="2010" name="Plant Physiol.">
        <title>Photoreceptors CRYTOCHROME2 and phytochrome B control chromatin compaction in Arabidopsis.</title>
        <authorList>
            <person name="van Zanten M."/>
            <person name="Tessadori F."/>
            <person name="McLoughlin F."/>
            <person name="Smith R."/>
            <person name="Millenaar F.F."/>
            <person name="van Driel R."/>
            <person name="Voesenek L.A.C.J."/>
            <person name="Peeters A.J.M."/>
            <person name="Fransz P."/>
        </authorList>
    </citation>
    <scope>FUNCTION</scope>
    <scope>DISRUPTION PHENOTYPE</scope>
    <scope>INDUCTION BY LOW LIGHT</scope>
    <source>
        <strain>cv. Columbia</strain>
        <strain>cv. Landsberg erecta</strain>
    </source>
</reference>
<reference key="36">
    <citation type="journal article" date="2010" name="Proc. Natl. Acad. Sci. U.S.A.">
        <title>Cryptochrome 2 and phototropin 2 regulate resistance protein-mediated viral defense by negatively regulating an E3 ubiquitin ligase.</title>
        <authorList>
            <person name="Jeong R.-D."/>
            <person name="Chandra-Shekara A.C."/>
            <person name="Barman S.R."/>
            <person name="Navarre D."/>
            <person name="Klessig D.F."/>
            <person name="Kachroo A."/>
            <person name="Kachroo P."/>
        </authorList>
    </citation>
    <scope>FUNCTION</scope>
    <scope>DISRUPTION PHENOTYPE</scope>
    <scope>REGULATION BY BLUE-LIGHT AND DARKNESS</scope>
    <scope>INTERACTION WITH COP1</scope>
    <scope>SUBCELLULAR LOCATION</scope>
</reference>
<reference key="37">
    <citation type="journal article" date="2011" name="Curr. Biol.">
        <title>Blue light-dependent interaction of CRY2 with SPA1 regulates COP1 activity and floral initiation in Arabidopsis.</title>
        <authorList>
            <person name="Zuo Z."/>
            <person name="Liu H."/>
            <person name="Liu B."/>
            <person name="Liu X."/>
            <person name="Lin C."/>
        </authorList>
    </citation>
    <scope>FUNCTION</scope>
    <scope>INTERACTION WITH SPA1</scope>
    <scope>MUTAGENESIS OF ASP-387</scope>
</reference>
<reference key="38">
    <citation type="journal article" date="2011" name="Genes Dev.">
        <title>Blue-light-dependent interaction of cryptochrome 1 with SPA1 defines a dynamic signaling mechanism.</title>
        <authorList>
            <person name="Lian H.-L."/>
            <person name="He S.-B."/>
            <person name="Zhang Y.-C."/>
            <person name="Zhu D.-M."/>
            <person name="Zhang J.-Y."/>
            <person name="Jia K.-P."/>
            <person name="Sun S.-X."/>
            <person name="Li L."/>
            <person name="Yang H.-Q."/>
        </authorList>
    </citation>
    <scope>FUNCTION</scope>
    <scope>DISRUPTION PHENOTYPE</scope>
    <scope>SUBCELLULAR LOCATION</scope>
    <scope>INTERACTION WITH SPA1</scope>
    <source>
        <strain>cv. Columbia</strain>
    </source>
</reference>
<reference key="39">
    <citation type="journal article" date="2011" name="J. Exp. Bot.">
        <title>Double loss-of-function mutation in EARLY FLOWERING 3 and CRYPTOCHROME 2 genes delays flowering under continuous light but accelerates it under long days and short days: an important role for Arabidopsis CRY2 to accelerate flowering time in continuous light.</title>
        <authorList>
            <person name="Nefissi R."/>
            <person name="Natsui Y."/>
            <person name="Miyata K."/>
            <person name="Oda A."/>
            <person name="Hase Y."/>
            <person name="Nakagawa M."/>
            <person name="Ghorbel A."/>
            <person name="Mizoguchi T."/>
        </authorList>
    </citation>
    <scope>FUNCTION</scope>
    <scope>DISRUPTION PHENOTYPE</scope>
</reference>
<reference key="40">
    <citation type="journal article" date="2011" name="Proc. Natl. Acad. Sci. U.S.A.">
        <title>Arabidopsis cryptochrome 2 (CRY2) functions by the photoactivation mechanism distinct from the tryptophan (trp) triad-dependent photoreduction.</title>
        <authorList>
            <person name="Li X."/>
            <person name="Wang Q."/>
            <person name="Yu X."/>
            <person name="Liu H."/>
            <person name="Yang H."/>
            <person name="Zhao C."/>
            <person name="Liu X."/>
            <person name="Tan C."/>
            <person name="Klejnot J."/>
            <person name="Zhong D."/>
            <person name="Lin C."/>
        </authorList>
    </citation>
    <scope>MUTAGENESIS OF TRP-321; TRP-374 AND TRP-397</scope>
    <scope>INTERACTION WITH SPA1 AND BHLH63/CIB1</scope>
    <source>
        <strain>cv. Columbia</strain>
    </source>
</reference>
<reference key="41">
    <citation type="journal article" date="2012" name="Mol. Plant">
        <title>Substitution of a conserved glycine in the PHR domain of Arabidopsis cryptochrome 1 confers a constitutive light response.</title>
        <authorList>
            <person name="Gu N.-N."/>
            <person name="Zhang Y.-C."/>
            <person name="Yang H.-Q."/>
        </authorList>
    </citation>
    <scope>MUTAGENESIS OF GLY-377</scope>
</reference>
<reference key="42">
    <citation type="journal article" date="2012" name="Mol. Plant">
        <title>A study of the blue-light-dependent phosphorylation, degradation, and photobody formation of Arabidopsis CRY2.</title>
        <authorList>
            <person name="Zuo Z.-C."/>
            <person name="Meng Y.-Y."/>
            <person name="Yu X.-H."/>
            <person name="Zhang Z.-L."/>
            <person name="Feng D.-S."/>
            <person name="Sun S.-F."/>
            <person name="Liu B."/>
            <person name="Lin C.-T."/>
        </authorList>
    </citation>
    <scope>SUBCELLULAR LOCATION</scope>
    <scope>REGULATION BY BLUE LIGHT</scope>
    <scope>MUTAGENESIS OF LYS-541 AND 554-LYS-LYS-555</scope>
    <source>
        <strain>cv. Columbia</strain>
    </source>
</reference>
<reference key="43">
    <citation type="journal article" date="2012" name="Plant Cell">
        <title>Degradation of Arabidopsis CRY2 is regulated by SPA proteins and phytochrome A.</title>
        <authorList>
            <person name="Weidler G."/>
            <person name="Zur Oven-Krockhaus S."/>
            <person name="Heunemann M."/>
            <person name="Orth C."/>
            <person name="Schleifenbaum F."/>
            <person name="Harter K."/>
            <person name="Hoecker U."/>
            <person name="Batschauer A."/>
        </authorList>
    </citation>
    <scope>INTERACTION WITH SPA1</scope>
    <scope>SUBCELLULAR LOCATION</scope>
</reference>
<reference key="44">
    <citation type="journal article" date="2012" name="Plant Physiol.">
        <title>Phototropins but not cryptochromes mediate the blue light-specific promotion of stomatal conductance, while both enhance photosynthesis and transpiration under full sunlight.</title>
        <authorList>
            <person name="Boccalandro H.E."/>
            <person name="Giordano C.V."/>
            <person name="Ploschuk E.L."/>
            <person name="Piccoli P.N."/>
            <person name="Bottini R."/>
            <person name="Casal J.J."/>
        </authorList>
    </citation>
    <scope>FUNCTION</scope>
    <scope>DISRUPTION PHENOTYPE</scope>
    <source>
        <strain>cv. Columbia</strain>
    </source>
</reference>
<reference key="45">
    <citation type="journal article" date="2012" name="Proc. Natl. Acad. Sci. U.S.A.">
        <title>Optogenetic control of phosphoinositide metabolism.</title>
        <authorList>
            <person name="Idevall-Hagren O."/>
            <person name="Dickson E.J."/>
            <person name="Hille B."/>
            <person name="Toomre D.K."/>
            <person name="De Camilli P."/>
        </authorList>
    </citation>
    <scope>BIOTECHNOLOGY</scope>
</reference>
<reference key="46">
    <citation type="journal article" date="2013" name="J. Biol. Chem.">
        <title>Formation of Arabidopsis Cryptochrome 2 photobodies in mammalian nuclei: application as an optogenetic DNA damage checkpoint switch.</title>
        <authorList>
            <person name="Ozkan-Dagliyan I."/>
            <person name="Chiou Y.-Y."/>
            <person name="Ye R."/>
            <person name="Hassan B.H."/>
            <person name="Ozturk N."/>
            <person name="Sancar A."/>
        </authorList>
    </citation>
    <scope>SUBCELLULAR LOCATION</scope>
    <scope>BIOTECHNOLOGY</scope>
</reference>
<reference key="47">
    <citation type="journal article" date="2013" name="Mol. Syst. Biol.">
        <title>Network balance via CRY signalling controls the Arabidopsis circadian clock over ambient temperatures.</title>
        <authorList>
            <person name="Gould P.D."/>
            <person name="Ugarte N."/>
            <person name="Domijan M."/>
            <person name="Costa M."/>
            <person name="Foreman J."/>
            <person name="Macgregor D."/>
            <person name="Rose K."/>
            <person name="Griffiths J."/>
            <person name="Millar A.J."/>
            <person name="Finkenstaedt B."/>
            <person name="Penfield S."/>
            <person name="Rand D.A."/>
            <person name="Halliday K.J."/>
            <person name="Hall A.J.W."/>
        </authorList>
    </citation>
    <scope>FUNCTION</scope>
    <scope>DISRUPTION PHENOTYPE</scope>
    <scope>INDUCTION BY TEMPERATURE</scope>
    <source>
        <strain>cv. Columbia</strain>
    </source>
</reference>
<reference key="48">
    <citation type="journal article" date="2013" name="Plant Cell">
        <title>Arabidopsis casein kinase1 proteins CK1.3 and CK1.4 phosphorylate cryptochrome2 to regulate blue light signaling.</title>
        <authorList>
            <person name="Tan S.-T."/>
            <person name="Dai C."/>
            <person name="Liu H.-T."/>
            <person name="Xue H.-W."/>
        </authorList>
    </citation>
    <scope>PHOSPHORYLATION AT SER-587 AND THR-603 BY CK1.3 AND CK1.4</scope>
    <scope>MUTAGENESIS OF SER-587 AND THR-603</scope>
</reference>
<reference key="49">
    <citation type="journal article" date="2013" name="Plant J.">
        <title>Lifetimes of Arabidopsis cryptochrome signaling states in vivo.</title>
        <authorList>
            <person name="Herbel V."/>
            <person name="Orth C."/>
            <person name="Wenzel R."/>
            <person name="Ahmad M."/>
            <person name="Bittl R."/>
            <person name="Batschauer A."/>
        </authorList>
    </citation>
    <scope>FUNCTION</scope>
    <source>
        <strain>cv. Landsberg erecta</strain>
    </source>
</reference>
<reference key="50">
    <citation type="journal article" date="2013" name="PLoS Genet.">
        <title>Multiple bHLH proteins form heterodimers to mediate CRY2-dependent regulation of flowering-time in Arabidopsis.</title>
        <authorList>
            <person name="Liu Y."/>
            <person name="Li X."/>
            <person name="Li K."/>
            <person name="Liu H."/>
            <person name="Lin C."/>
        </authorList>
    </citation>
    <scope>FUNCTION</scope>
    <scope>INTERACTION WITH BHLH63/CIB1; BHLH78/CIB2; BHLH74/CIB4 AND BHLH76/CIB5</scope>
    <source>
        <strain>cv. Columbia</strain>
    </source>
</reference>
<reference key="51">
    <citation type="journal article" date="2014" name="Anal. Biochem.">
        <title>Quantitative real-time kinetics of optogenetic proteins CRY2 and CIB1/N using single-molecule tools.</title>
        <authorList>
            <person name="Cui Y."/>
            <person name="Choudhury S.R."/>
            <person name="Irudayaraj J."/>
        </authorList>
    </citation>
    <scope>INTERACTION WITH BHLH63/CIB1</scope>
</reference>
<reference key="52">
    <citation type="journal article" date="2014" name="Methods Mol. Biol.">
        <title>Manipulation of plasma membrane phosphoinositides using photoinduced protein-protein interactions.</title>
        <authorList>
            <person name="Idevall-Hagren O."/>
            <person name="Decamilli P."/>
        </authorList>
    </citation>
    <scope>BIOTECHNOLOGY</scope>
</reference>
<reference key="53">
    <citation type="journal article" date="2014" name="Mol. Plant">
        <title>Strigolactone-regulated hypocotyl elongation is dependent on cryptochrome and phytochrome signaling pathways in Arabidopsis.</title>
        <authorList>
            <person name="Jia K.-P."/>
            <person name="Luo Q."/>
            <person name="He S.-B."/>
            <person name="Lu X.-D."/>
            <person name="Yang H.-Q."/>
        </authorList>
    </citation>
    <scope>FUNCTION</scope>
    <scope>DISRUPTION PHENOTYPE</scope>
    <source>
        <strain>cv. Columbia</strain>
    </source>
</reference>
<reference key="54">
    <citation type="journal article" date="2014" name="Plant Cell">
        <title>Cellular metabolites enhance the light sensitivity of Arabidopsis cryptochrome through alternate electron transfer pathways.</title>
        <authorList>
            <person name="Engelhard C."/>
            <person name="Wang X."/>
            <person name="Robles D."/>
            <person name="Moldt J."/>
            <person name="Essen L.-O."/>
            <person name="Batschauer A."/>
            <person name="Bittl R."/>
            <person name="Ahmad M."/>
        </authorList>
    </citation>
    <scope>FUNCTION</scope>
    <scope>COFACTOR</scope>
    <scope>MUTAGENESIS OF TRP-321; TRP-331; TRP-374; TRP-376; TRP-397 AND TYR-399</scope>
</reference>
<reference key="55">
    <citation type="journal article" date="2015" name="Bioelectromagnetics">
        <title>Suppression of Arabidopsis flowering by near-null magnetic field is affected by light.</title>
        <authorList>
            <person name="Xu C."/>
            <person name="Li Y."/>
            <person name="Yu Y."/>
            <person name="Zhang Y."/>
            <person name="Wei S."/>
        </authorList>
    </citation>
    <scope>FUNCTION</scope>
    <scope>DISRUPTION PHENOTYPE</scope>
</reference>
<reference key="56">
    <citation type="journal article" date="2015" name="Chem. Biol.">
        <title>Optogenetic control of molecular motors and organelle distributions in cells.</title>
        <authorList>
            <person name="Duan L."/>
            <person name="Che D."/>
            <person name="Zhang K."/>
            <person name="Ong Q."/>
            <person name="Guo S."/>
            <person name="Cui B."/>
        </authorList>
    </citation>
    <scope>BIOTECHNOLOGY</scope>
</reference>
<reference key="57">
    <citation type="journal article" date="2015" name="Mol. Plant">
        <title>The blue light-dependent phosphorylation of the CCE domain determines the photosensitivity of Arabidopsis CRY2.</title>
        <authorList>
            <person name="Wang Q."/>
            <person name="Barshop W.D."/>
            <person name="Bian M."/>
            <person name="Vashisht A.A."/>
            <person name="He R."/>
            <person name="Yu X."/>
            <person name="Liu B."/>
            <person name="Nguyen P."/>
            <person name="Liu X."/>
            <person name="Zhao X."/>
            <person name="Wohlschlegel J.A."/>
            <person name="Lin C."/>
        </authorList>
    </citation>
    <scope>SUBCELLULAR LOCATION</scope>
    <scope>PHOSPHORYLATION AT SER-598; SER-599 AND SER-605</scope>
    <scope>MUTAGENESIS OF 570-SER--SER-575; SER-580; SER-582; SER-584; SER-587; 598-SER-SER-599 AND SER-605</scope>
    <scope>IDENTIFICATION BY MASS SPECTROMETRY</scope>
    <scope>UBIQUITINATION</scope>
    <scope>REGULATION BY BLUE LIGHT</scope>
</reference>
<reference key="58">
    <citation type="journal article" date="2015" name="Mol. Plant">
        <title>The CNT1 domain of Arabidopsis CRY1 Alone is sufficient to mediate blue light inhibition of hypocotyl elongation.</title>
        <authorList>
            <person name="He S.B."/>
            <person name="Wang W.X."/>
            <person name="Zhang J.Y."/>
            <person name="Xu F."/>
            <person name="Lian H.L."/>
            <person name="Li L."/>
            <person name="Yang H.Q."/>
        </authorList>
    </citation>
    <scope>DOMAINS</scope>
</reference>
<reference key="59">
    <citation type="journal article" date="2015" name="Plant Signal. Behav.">
        <title>Blue-light dependent ROS formation by Arabidopsis cryptochrome-2 may contribute toward its signaling role.</title>
        <authorList>
            <person name="Jourdan N."/>
            <person name="Martino C.F."/>
            <person name="El-Esawi M."/>
            <person name="Witczak J."/>
            <person name="Bouchet P.-E."/>
            <person name="d'Harlingue A."/>
            <person name="Ahmad M."/>
        </authorList>
    </citation>
    <scope>SUBCELLULAR LOCATION</scope>
    <scope>FUNCTION</scope>
</reference>
<reference key="60">
    <citation type="journal article" date="2016" name="Cell">
        <title>Cryptochromes interact directly with PIFs to control plant growth in limiting blue light.</title>
        <authorList>
            <person name="Pedmale U.V."/>
            <person name="Huang S.S."/>
            <person name="Zander M."/>
            <person name="Cole B.J."/>
            <person name="Hetzel J."/>
            <person name="Ljung K."/>
            <person name="Reis P.A."/>
            <person name="Sridevi P."/>
            <person name="Nito K."/>
            <person name="Nery J.R."/>
            <person name="Ecker J.R."/>
            <person name="Chory J."/>
        </authorList>
    </citation>
    <scope>FUNCTION</scope>
    <scope>INDUCTION BY LOW BLUE LIGHT</scope>
    <scope>INTERACTION WITH PIF4 AND PIF5</scope>
    <scope>SUBCELLULAR LOCATION</scope>
</reference>
<reference key="61">
    <citation type="journal article" date="2016" name="Science">
        <title>Photoactivation and inactivation of Arabidopsis cryptochrome 2.</title>
        <authorList>
            <person name="Wang Q."/>
            <person name="Zuo Z."/>
            <person name="Wang X."/>
            <person name="Gu L."/>
            <person name="Yoshizumi T."/>
            <person name="Yang Z."/>
            <person name="Yang L."/>
            <person name="Liu Q."/>
            <person name="Liu W."/>
            <person name="Han Y.J."/>
            <person name="Kim J.I."/>
            <person name="Liu B."/>
            <person name="Wohlschlegel J.A."/>
            <person name="Matsui M."/>
            <person name="Oka Y."/>
            <person name="Lin C."/>
        </authorList>
    </citation>
    <scope>INTERACTION WITH BIC1</scope>
    <scope>SUBUNIT</scope>
</reference>
<reference key="62">
    <citation type="journal article" date="2017" name="J. Exp. Bot.">
        <title>The asparagine-rich protein NRP interacts with the Verticillium effector PevD1 and regulates the subcellular localization of cryptochrome 2.</title>
        <authorList>
            <person name="Zhou R."/>
            <person name="Zhu T."/>
            <person name="Han L."/>
            <person name="Liu M."/>
            <person name="Xu M."/>
            <person name="Liu Y."/>
            <person name="Han D."/>
            <person name="Qiu D."/>
            <person name="Gong Q."/>
            <person name="Liu X."/>
        </authorList>
    </citation>
    <scope>INTERACTION WITH NRP</scope>
</reference>
<reference key="63">
    <citation type="journal article" date="2020" name="Nat. Struct. Mol. Biol.">
        <title>Structural insights into BIC-mediated inactivation of Arabidopsis cryptochrome 2.</title>
        <authorList>
            <person name="Ma L."/>
            <person name="Wang X."/>
            <person name="Guan Z."/>
            <person name="Wang L."/>
            <person name="Wang Y."/>
            <person name="Zheng L."/>
            <person name="Gong Z."/>
            <person name="Shen C."/>
            <person name="Wang J."/>
            <person name="Zhang D."/>
            <person name="Liu Z."/>
            <person name="Yin P."/>
        </authorList>
    </citation>
    <scope>X-RAY CRYSTALLOGRAPHY (2.50 ANGSTROMS)IN COMPLEX WITH FAD AND ATP</scope>
</reference>
<organism>
    <name type="scientific">Arabidopsis thaliana</name>
    <name type="common">Mouse-ear cress</name>
    <dbReference type="NCBI Taxonomy" id="3702"/>
    <lineage>
        <taxon>Eukaryota</taxon>
        <taxon>Viridiplantae</taxon>
        <taxon>Streptophyta</taxon>
        <taxon>Embryophyta</taxon>
        <taxon>Tracheophyta</taxon>
        <taxon>Spermatophyta</taxon>
        <taxon>Magnoliopsida</taxon>
        <taxon>eudicotyledons</taxon>
        <taxon>Gunneridae</taxon>
        <taxon>Pentapetalae</taxon>
        <taxon>rosids</taxon>
        <taxon>malvids</taxon>
        <taxon>Brassicales</taxon>
        <taxon>Brassicaceae</taxon>
        <taxon>Camelineae</taxon>
        <taxon>Arabidopsis</taxon>
    </lineage>
</organism>
<protein>
    <recommendedName>
        <fullName evidence="61">Cryptochrome-2</fullName>
        <shortName evidence="61">Atcry2</shortName>
    </recommendedName>
    <alternativeName>
        <fullName evidence="60">Blue light photoreceptor</fullName>
    </alternativeName>
    <alternativeName>
        <fullName evidence="60">Protein PHR homolog 1</fullName>
        <shortName evidence="60">AtPHH1</shortName>
    </alternativeName>
    <alternativeName>
        <fullName evidence="57">Protein SUPPRESSOR OF elf3 20</fullName>
    </alternativeName>
</protein>
<proteinExistence type="evidence at protein level"/>
<sequence>MKMDKKTIVWFRRDLRIEDNPALAAAAHEGSVFPVFIWCPEEEGQFYPGRASRWWMKQSLAHLSQSLKALGSDLTLIKTHNTISAILDCIRVTGATKVVFNHLYDPVSLVRDHTVKEKLVERGISVQSYNGDLLYEPWEIYCEKGKPFTSFNSYWKKCLDMSIESVMLPPPWRLMPITAAAEAIWACSIEELGLENEAEKPSNALLTRAWSPGWSNADKLLNEFIEKQLIDYAKNSKKVVGNSTSLLSPYLHFGEISVRHVFQCARMKQIIWARDKNSEGEESADLFLRGIGLREYSRYICFNFPFTHEQSLLSHLRFFPWDADVDKFKAWRQGRTGYPLVDAGMRELWATGWMHNRIRVIVSSFAVKFLLLPWKWGMKYFWDTLLDADLECDILGWQYISGSIPDGHELDRLDNPALQGAKYDPEGEYIRQWLPELARLPTEWIHHPWDAPLTVLKASGVELGTNYAKPIVDIDTARELLAKAISRTREAQIMIGAAPDEIVADSFEALGANTIKEPGLCPSVSSNDQQVPSAVRYNGSKRVKPEEEEERDMKKSRGFDERELFSTAESSSSSSVFFVSQSCSLASEGKNLEGIQDSSDQITTSLGKNGCK</sequence>
<keyword id="KW-0002">3D-structure</keyword>
<keyword id="KW-0067">ATP-binding</keyword>
<keyword id="KW-0156">Chromatin regulator</keyword>
<keyword id="KW-0157">Chromophore</keyword>
<keyword id="KW-0963">Cytoplasm</keyword>
<keyword id="KW-0274">FAD</keyword>
<keyword id="KW-0285">Flavoprotein</keyword>
<keyword id="KW-0460">Magnesium</keyword>
<keyword id="KW-0479">Metal-binding</keyword>
<keyword id="KW-0547">Nucleotide-binding</keyword>
<keyword id="KW-0539">Nucleus</keyword>
<keyword id="KW-0597">Phosphoprotein</keyword>
<keyword id="KW-0600">Photoreceptor protein</keyword>
<keyword id="KW-0611">Plant defense</keyword>
<keyword id="KW-0675">Receptor</keyword>
<keyword id="KW-1185">Reference proteome</keyword>
<keyword id="KW-0716">Sensory transduction</keyword>
<keyword id="KW-0832">Ubl conjugation</keyword>
<feature type="chain" id="PRO_0000085122" description="Cryptochrome-2">
    <location>
        <begin position="1"/>
        <end position="612"/>
    </location>
</feature>
<feature type="domain" description="Photolyase/cryptochrome alpha/beta" evidence="3">
    <location>
        <begin position="5"/>
        <end position="134"/>
    </location>
</feature>
<feature type="region of interest" description="CNT2, binds chromophores to sense blue light and mediate CRY dimerization" evidence="59">
    <location>
        <begin position="1"/>
        <end position="485"/>
    </location>
</feature>
<feature type="region of interest" description="CCT2/CCE2, mediates blue light signaling" evidence="8 59">
    <location>
        <begin position="486"/>
        <end position="612"/>
    </location>
</feature>
<feature type="region of interest" description="Disordered" evidence="5">
    <location>
        <begin position="539"/>
        <end position="576"/>
    </location>
</feature>
<feature type="region of interest" description="Disordered" evidence="5">
    <location>
        <begin position="590"/>
        <end position="612"/>
    </location>
</feature>
<feature type="short sequence motif" description="Nuclear localization signal" evidence="4">
    <location>
        <begin position="541"/>
        <end position="555"/>
    </location>
</feature>
<feature type="compositionally biased region" description="Basic and acidic residues" evidence="5">
    <location>
        <begin position="551"/>
        <end position="564"/>
    </location>
</feature>
<feature type="compositionally biased region" description="Polar residues" evidence="5">
    <location>
        <begin position="596"/>
        <end position="612"/>
    </location>
</feature>
<feature type="binding site" evidence="53 67 68">
    <location>
        <position position="232"/>
    </location>
    <ligand>
        <name>FAD</name>
        <dbReference type="ChEBI" id="CHEBI:57692"/>
    </ligand>
</feature>
<feature type="binding site" evidence="2">
    <location>
        <position position="235"/>
    </location>
    <ligand>
        <name>Mg(2+)</name>
        <dbReference type="ChEBI" id="CHEBI:18420"/>
        <label>1</label>
    </ligand>
</feature>
<feature type="binding site" evidence="2">
    <location>
        <position position="243"/>
    </location>
    <ligand>
        <name>Mg(2+)</name>
        <dbReference type="ChEBI" id="CHEBI:18420"/>
        <label>1</label>
    </ligand>
</feature>
<feature type="binding site" evidence="53 67 68">
    <location>
        <begin position="244"/>
        <end position="248"/>
    </location>
    <ligand>
        <name>FAD</name>
        <dbReference type="ChEBI" id="CHEBI:57692"/>
    </ligand>
</feature>
<feature type="binding site" evidence="2">
    <location>
        <position position="355"/>
    </location>
    <ligand>
        <name>Mg(2+)</name>
        <dbReference type="ChEBI" id="CHEBI:18420"/>
        <label>1</label>
    </ligand>
</feature>
<feature type="binding site" evidence="53 68">
    <location>
        <begin position="356"/>
        <end position="357"/>
    </location>
    <ligand>
        <name>ATP</name>
        <dbReference type="ChEBI" id="CHEBI:30616"/>
    </ligand>
</feature>
<feature type="binding site" evidence="53 67 68">
    <location>
        <position position="356"/>
    </location>
    <ligand>
        <name>FAD</name>
        <dbReference type="ChEBI" id="CHEBI:57692"/>
    </ligand>
</feature>
<feature type="binding site" evidence="53 67 68">
    <location>
        <begin position="387"/>
        <end position="389"/>
    </location>
    <ligand>
        <name>FAD</name>
        <dbReference type="ChEBI" id="CHEBI:57692"/>
    </ligand>
</feature>
<feature type="binding site" evidence="2">
    <location>
        <position position="406"/>
    </location>
    <ligand>
        <name>ATP</name>
        <dbReference type="ChEBI" id="CHEBI:30616"/>
    </ligand>
</feature>
<feature type="site" description="Involved in electron transfer from the protein surface to the FAD cofactor" evidence="45">
    <location>
        <position position="321"/>
    </location>
</feature>
<feature type="site" description="Involved in electron transfer from the protein surface to the FAD cofactor" evidence="45">
    <location>
        <position position="374"/>
    </location>
</feature>
<feature type="site" description="Involved in electron transfer from the protein surface to the FAD cofactor" evidence="45">
    <location>
        <position position="397"/>
    </location>
</feature>
<feature type="modified residue" description="Phosphoserine; by CK1" evidence="40">
    <location>
        <position position="587"/>
    </location>
</feature>
<feature type="modified residue" description="Phosphoserine" evidence="46">
    <location>
        <position position="598"/>
    </location>
</feature>
<feature type="modified residue" description="Phosphoserine" evidence="46">
    <location>
        <position position="599"/>
    </location>
</feature>
<feature type="modified residue" description="Phosphothreonine; by CK1" evidence="40">
    <location>
        <position position="603"/>
    </location>
</feature>
<feature type="modified residue" description="Phosphoserine" evidence="46">
    <location>
        <position position="605"/>
    </location>
</feature>
<feature type="sequence variant" description="In strain: cv. Chi-1, cv. Co-1, cv. Kon, cv. PHW-1 and cv. Sha." evidence="63">
    <original>I</original>
    <variation>V</variation>
    <location>
        <position position="83"/>
    </location>
</feature>
<feature type="sequence variant" description="In strain: cv. Bu-0, cv. Da(1)-12, cv. Di-G, cv. Landsberg erecta, cv. Le-0, cv. Lip-0, cv. Mrk-0, cv. Stw-0 and cv. Ta-0." evidence="63">
    <original>Q</original>
    <variation>S</variation>
    <location>
        <position position="127"/>
    </location>
</feature>
<feature type="sequence variant" description="In strain: cv. Chi-1, cv. Co-1, cv. Kon, cv. PHW-1 and cv. Sha." evidence="63">
    <original>D</original>
    <variation>E</variation>
    <location>
        <position position="326"/>
    </location>
</feature>
<feature type="sequence variant" description="In strain: cv. Cvi-0." evidence="63">
    <original>V</original>
    <variation>M</variation>
    <location>
        <position position="367"/>
    </location>
</feature>
<feature type="sequence variant" description="In strain: cv. Cvi-0." evidence="63">
    <original>T</original>
    <variation>I</variation>
    <location>
        <position position="476"/>
    </location>
</feature>
<feature type="sequence variant" description="In strain: cv. Chi-1, cv. Co-1, cv. Kon, cv. PHW-1 and cv. Sha." evidence="63">
    <original>A</original>
    <variation>G</variation>
    <location>
        <position position="482"/>
    </location>
</feature>
<feature type="sequence variant" description="In strain: cv. Chi-1, cv. Co-1, cv. Kon, cv. PHW-1 and cv. Sha." evidence="63">
    <original>A</original>
    <variation>S</variation>
    <location>
        <position position="498"/>
    </location>
</feature>
<feature type="sequence variant" description="In strain: cv. Chi-1, cv. Co-1, cv. Kon, cv. PHW-1 and cv. Sha." evidence="63">
    <original>F</original>
    <variation>L</variation>
    <location>
        <position position="507"/>
    </location>
</feature>
<feature type="sequence variant" description="In strain: cv. Chi-1, cv. Co-1, cv. Kon, cv. PHW-1 and cv. Sha." evidence="63">
    <original>G</original>
    <variation>E</variation>
    <location>
        <position position="511"/>
    </location>
</feature>
<feature type="sequence variant" description="In strain: cv. Chi-1, cv. Co-1, cv. Kon, cv. PHW-1 and cv. Sha." evidence="63">
    <original>V</original>
    <variation>L</variation>
    <location>
        <position position="543"/>
    </location>
</feature>
<feature type="sequence variant" description="In strain: cv. Chi-1, cv. Co-1, cv. Kon, cv. PHW-1 and cv. Sha." evidence="63">
    <original>C</original>
    <variation>Y</variation>
    <location>
        <position position="611"/>
    </location>
</feature>
<feature type="mutagenesis site" description="Photochemically inactive in vitro. Undergo robust light-dependent photoreduction in an in vivo context via an alternative electron transport involving small molecule activators including ATP, NADH, and NADPH." evidence="32 45">
    <original>W</original>
    <variation>A</variation>
    <variation>F</variation>
    <location>
        <position position="321"/>
    </location>
</feature>
<feature type="mutagenesis site" description="Decreased light sensitivity. Enhanced photoreduction in the presence of added ATP." evidence="45">
    <original>W</original>
    <variation>A</variation>
    <location>
        <position position="331"/>
    </location>
</feature>
<feature type="mutagenesis site" description="Loss of activity." evidence="55">
    <original>G</original>
    <variation>E</variation>
    <location>
        <position position="337"/>
    </location>
</feature>
<feature type="mutagenesis site" description="Photochemically inactive in vitro. Undergo robust light-dependent photoreduction in an in vivo context via an alternative electron transport involving small molecule activators including ATP, NADH, and NADPH. Enhanced photoreduction in the presence of added ATP. Constitutive interaction with SPA1 and BHLH63/CIB1." evidence="32 45">
    <original>W</original>
    <variation>A</variation>
    <location>
        <position position="374"/>
    </location>
</feature>
<feature type="mutagenesis site" description="Photochemically inactive in vitro. Undergo robust light-dependent photoreduction in an in vivo context via an alternative electron transport involving small molecule activators including ATP, NADH, and NADPH. Enhanced photoreduction in the presence of added ATP." evidence="32 45">
    <original>W</original>
    <variation>F</variation>
    <location>
        <position position="374"/>
    </location>
</feature>
<feature type="mutagenesis site" description="Decreased light sensitivity. Enhanced photoreduction in the presence of added ATP." evidence="45">
    <original>W</original>
    <variation>A</variation>
    <location>
        <position position="376"/>
    </location>
</feature>
<feature type="mutagenesis site" description="Constitutive light response." evidence="31">
    <original>G</original>
    <variation>R</variation>
    <location>
        <position position="377"/>
    </location>
</feature>
<feature type="mutagenesis site" description="Impaired FAD-binding leading to impaired blue light-mediated inhibition of hypocotyl elongation and loss of blue light-induced degradation. Disturbed BHLH63/CIB1 and SPA1 interactions." evidence="23 30">
    <original>D</original>
    <variation>A</variation>
    <location>
        <position position="387"/>
    </location>
</feature>
<feature type="mutagenesis site" description="Photochemically inactive in vitro. Undergo robust light-dependent photoreduction in an in vivo context via an alternative electron transport involving small molecule activators including ATP, NADH, and NADPH." evidence="32 45">
    <original>W</original>
    <variation>A</variation>
    <location>
        <position position="397"/>
    </location>
</feature>
<feature type="mutagenesis site" description="Photochemically inactive both in vitro and in vivo." evidence="32 45">
    <original>W</original>
    <variation>F</variation>
    <location>
        <position position="397"/>
    </location>
</feature>
<feature type="mutagenesis site" description="Impaired ATP-mediated enhanced photoreduction and decreased affinity for ATP." evidence="45">
    <original>Y</original>
    <variation>A</variation>
    <variation>F</variation>
    <location>
        <position position="399"/>
    </location>
</feature>
<feature type="mutagenesis site" description="Impaired nuclear importation leading to reduced phosphorylation, physiological activities, and degradation in response to blue light. Forms protein bodies (photobodies) in both the nucleus and cytosol in response to blue light." evidence="34">
    <original>K</original>
    <variation>R</variation>
    <location>
        <position position="541"/>
    </location>
</feature>
<feature type="mutagenesis site" description="Impaired nuclear importation leading to reduced phosphorylation, physiological activities, and degradation in response to blue light. Forms protein bodies (photobodies) in both the nucleus and cytosol in response to blue light." evidence="34">
    <original>KK</original>
    <variation>RR</variation>
    <location>
        <begin position="554"/>
        <end position="555"/>
    </location>
</feature>
<feature type="mutagenesis site" description="Reduced blue light-mediated phosphorylation and impaired blue light-dependent proteolysis and hypocotyl inhibition response; when associated with A-580, A-582, A-584, A-587, 598-A-A-599 and A-605." evidence="46">
    <original>SSSSSS</original>
    <variation>AAAAAA</variation>
    <location>
        <begin position="570"/>
        <end position="575"/>
    </location>
</feature>
<feature type="mutagenesis site" description="Reduced blue light-mediated phosphorylation and impaired blue light-dependent proteolysis and hypocotyl inhibition response; when associated with D-580, D-582, D-584, D-587, 598-D-D-599 and D-605." evidence="46">
    <original>SSSSSS</original>
    <variation>DDDDDD</variation>
    <location>
        <begin position="570"/>
        <end position="575"/>
    </location>
</feature>
<feature type="mutagenesis site" description="Reduced blue light-mediated phosphorylation and impaired blue light-dependent proteolysis and hypocotyl inhibition response; when associated with 570-A--A-573, A-582, A-584, A-587, 598-A-A-599 and A-605." evidence="46">
    <original>S</original>
    <variation>A</variation>
    <location>
        <position position="580"/>
    </location>
</feature>
<feature type="mutagenesis site" description="Reduced blue light-mediated phosphorylation and impaired blue light-dependent proteolysis and hypocotyl inhibition response; when associated with 570-D--D-573, D-582, D-584, D-587, 598-D-D-599 and D-605." evidence="46">
    <original>S</original>
    <variation>D</variation>
    <location>
        <position position="580"/>
    </location>
</feature>
<feature type="mutagenesis site" description="Reduced blue light-mediated phosphorylation and impaired blue light-dependent proteolysis and hypocotyl inhibition response; when associated with 570-A--A-573, A-580, A-584, A-587, 598-A-A-599 and A-605." evidence="46">
    <original>S</original>
    <variation>A</variation>
    <location>
        <position position="582"/>
    </location>
</feature>
<feature type="mutagenesis site" description="Reduced blue light-mediated phosphorylation and impaired blue light-dependent proteolysis and hypocotyl inhibition response; when associated with 570-D--D-573, D-580, D-584, D-587, 598-D-D-599 and D-605." evidence="46">
    <original>S</original>
    <variation>D</variation>
    <location>
        <position position="582"/>
    </location>
</feature>
<feature type="mutagenesis site" description="Reduced blue light-mediated phosphorylation and impaired blue light-dependent proteolysis and hypocotyl inhibition response; when associated with 570-A--A-573, A-580, A-582, A-587, 598-A-A-599 and A-605." evidence="46">
    <original>S</original>
    <variation>A</variation>
    <location>
        <position position="584"/>
    </location>
</feature>
<feature type="mutagenesis site" description="Reduced blue light-mediated phosphorylation and impaired blue light-dependent proteolysis and hypocotyl inhibition response; when associated with 570-D--D-573, D-580, D-582, D-587, 598-D-D-599 and D-605." evidence="46">
    <original>S</original>
    <variation>D</variation>
    <location>
        <position position="584"/>
    </location>
</feature>
<feature type="mutagenesis site" description="Impaired regulation of hypocotyl growth in blue light. Phosphorylated by CK1 proteins CK1.3 and CK1.4. Reduced phosphorylation by CK1 proteins CK1.3 and CK1.4; when associated with A-603. Reduced blue light-mediated phosphorylation and impaired blue light-dependent proteolysis and hypocotyl inhibition response; when associated with 570-A--A-573, A-580, A-582, A-584, 598-A-A-599 and A-605." evidence="40 46">
    <original>S</original>
    <variation>A</variation>
    <location>
        <position position="587"/>
    </location>
</feature>
<feature type="mutagenesis site" description="Constitutive regulation of hypocotyl growth in blue light. Reduced blue light-mediated phosphorylation and impaired blue light-dependent proteolysis and hypocotyl inhibition response; when associated with 570-D--D-573, D-580, D-582, D-584, 598-D-D-599 and D-605." evidence="40 46">
    <original>S</original>
    <variation>D</variation>
    <location>
        <position position="587"/>
    </location>
</feature>
<feature type="mutagenesis site" description="Reduced blue light-mediated phosphorylation and impaired blue light-dependent proteolysis and hypocotyl inhibition response; when associated with 570-A--A-573, A-580, A-582, A-584, A-587 and A-605." evidence="46">
    <original>SS</original>
    <variation>AA</variation>
    <location>
        <begin position="598"/>
        <end position="599"/>
    </location>
</feature>
<feature type="mutagenesis site" description="Reduced blue light-mediated phosphorylation and impaired blue light-dependent proteolysis and hypocotyl inhibition response; when associated with 570-D--D-573, D-580, D-582, D-584, D-587 and D-605." evidence="46">
    <original>SS</original>
    <variation>DD</variation>
    <location>
        <begin position="598"/>
        <end position="599"/>
    </location>
</feature>
<feature type="mutagenesis site" description="Impaired regulation of hypocotyl growth in blue light. Phosphorylated by CK1 proteins CK1.3 and CK1.4. Reduced phosphorylation by CK1 proteins CK1.3 and CK1.4; when associated with A-587." evidence="40">
    <original>T</original>
    <variation>A</variation>
    <location>
        <position position="603"/>
    </location>
</feature>
<feature type="mutagenesis site" description="Constitutive regulation of hypocotyl growth in blue light." evidence="40">
    <original>T</original>
    <variation>D</variation>
    <location>
        <position position="603"/>
    </location>
</feature>
<feature type="mutagenesis site" description="Reduced blue light-mediated phosphorylation and impaired blue light-dependent proteolysis and hypocotyl inhibition response; when associated with 570-A--A-573, A-580, A-582, A-584, A-587 and 598-A-A-599." evidence="46">
    <original>S</original>
    <variation>A</variation>
    <location>
        <position position="605"/>
    </location>
</feature>
<feature type="mutagenesis site" description="Reduced blue light-mediated phosphorylation and impaired blue light-dependent proteolysis and hypocotyl inhibition response; when associated with 570-D--D-573, D-580, D-582, D-584, D-587 and 598-D-D-599." evidence="46">
    <original>S</original>
    <variation>D</variation>
    <location>
        <position position="605"/>
    </location>
</feature>
<feature type="sequence conflict" description="In Ref. 1; AAB04996/AAB04997." evidence="62" ref="1">
    <original>K</original>
    <variation>Q</variation>
    <location>
        <position position="78"/>
    </location>
</feature>
<feature type="sequence conflict" description="In Ref. 1; AAB04996/AAB04997." evidence="62" ref="1">
    <original>A</original>
    <variation>P</variation>
    <location>
        <position position="95"/>
    </location>
</feature>
<feature type="sequence conflict" description="In Ref. 3; AAL16379." evidence="62" ref="3">
    <original>S</original>
    <variation>L</variation>
    <location>
        <position position="188"/>
    </location>
</feature>
<feature type="sequence conflict" description="In Ref. 1; AAB04996." evidence="62" ref="1">
    <original>A</original>
    <variation>G</variation>
    <location>
        <position position="366"/>
    </location>
</feature>
<feature type="sequence conflict" description="In Ref. 1; AAB04996/AAB04997." evidence="62" ref="1">
    <original>A</original>
    <variation>V</variation>
    <location>
        <position position="534"/>
    </location>
</feature>
<feature type="sequence conflict" description="In Ref. 1; CAA67508." evidence="62" ref="1">
    <original>K</original>
    <variation>E</variation>
    <location>
        <position position="590"/>
    </location>
</feature>
<feature type="sequence conflict" description="In Ref. 1; CAA67508." evidence="62" ref="1">
    <original>K</original>
    <variation>Q</variation>
    <location>
        <position position="612"/>
    </location>
</feature>
<feature type="strand" evidence="69">
    <location>
        <begin position="5"/>
        <end position="13"/>
    </location>
</feature>
<feature type="helix" evidence="69">
    <location>
        <begin position="21"/>
        <end position="29"/>
    </location>
</feature>
<feature type="strand" evidence="69">
    <location>
        <begin position="30"/>
        <end position="38"/>
    </location>
</feature>
<feature type="helix" evidence="69">
    <location>
        <begin position="40"/>
        <end position="43"/>
    </location>
</feature>
<feature type="helix" evidence="69">
    <location>
        <begin position="44"/>
        <end position="46"/>
    </location>
</feature>
<feature type="helix" evidence="69">
    <location>
        <begin position="50"/>
        <end position="69"/>
    </location>
</feature>
<feature type="strand" evidence="69">
    <location>
        <begin position="75"/>
        <end position="78"/>
    </location>
</feature>
<feature type="helix" evidence="69">
    <location>
        <begin position="82"/>
        <end position="93"/>
    </location>
</feature>
<feature type="strand" evidence="69">
    <location>
        <begin position="96"/>
        <end position="101"/>
    </location>
</feature>
<feature type="helix" evidence="69">
    <location>
        <begin position="106"/>
        <end position="121"/>
    </location>
</feature>
<feature type="strand" evidence="69">
    <location>
        <begin position="125"/>
        <end position="129"/>
    </location>
</feature>
<feature type="helix" evidence="71">
    <location>
        <begin position="137"/>
        <end position="139"/>
    </location>
</feature>
<feature type="strand" evidence="69">
    <location>
        <begin position="143"/>
        <end position="145"/>
    </location>
</feature>
<feature type="helix" evidence="69">
    <location>
        <begin position="151"/>
        <end position="159"/>
    </location>
</feature>
<feature type="turn" evidence="69">
    <location>
        <begin position="181"/>
        <end position="185"/>
    </location>
</feature>
<feature type="helix" evidence="69">
    <location>
        <begin position="190"/>
        <end position="192"/>
    </location>
</feature>
<feature type="helix" evidence="69">
    <location>
        <begin position="197"/>
        <end position="199"/>
    </location>
</feature>
<feature type="helix" evidence="69">
    <location>
        <begin position="200"/>
        <end position="209"/>
    </location>
</feature>
<feature type="helix" evidence="69">
    <location>
        <begin position="214"/>
        <end position="227"/>
    </location>
</feature>
<feature type="helix" evidence="69">
    <location>
        <begin position="229"/>
        <end position="231"/>
    </location>
</feature>
<feature type="helix" evidence="69">
    <location>
        <begin position="232"/>
        <end position="235"/>
    </location>
</feature>
<feature type="strand" evidence="69">
    <location>
        <begin position="239"/>
        <end position="242"/>
    </location>
</feature>
<feature type="helix" evidence="69">
    <location>
        <begin position="248"/>
        <end position="252"/>
    </location>
</feature>
<feature type="helix" evidence="69">
    <location>
        <begin position="258"/>
        <end position="274"/>
    </location>
</feature>
<feature type="helix" evidence="69">
    <location>
        <begin position="278"/>
        <end position="303"/>
    </location>
</feature>
<feature type="turn" evidence="69">
    <location>
        <begin position="315"/>
        <end position="318"/>
    </location>
</feature>
<feature type="helix" evidence="69">
    <location>
        <begin position="325"/>
        <end position="332"/>
    </location>
</feature>
<feature type="helix" evidence="69">
    <location>
        <begin position="339"/>
        <end position="351"/>
    </location>
</feature>
<feature type="helix" evidence="69">
    <location>
        <begin position="356"/>
        <end position="368"/>
    </location>
</feature>
<feature type="helix" evidence="69">
    <location>
        <begin position="374"/>
        <end position="384"/>
    </location>
</feature>
<feature type="helix" evidence="69">
    <location>
        <begin position="390"/>
        <end position="400"/>
    </location>
</feature>
<feature type="strand" evidence="70">
    <location>
        <begin position="404"/>
        <end position="407"/>
    </location>
</feature>
<feature type="helix" evidence="69">
    <location>
        <begin position="416"/>
        <end position="423"/>
    </location>
</feature>
<feature type="helix" evidence="71">
    <location>
        <begin position="425"/>
        <end position="427"/>
    </location>
</feature>
<feature type="helix" evidence="69">
    <location>
        <begin position="428"/>
        <end position="433"/>
    </location>
</feature>
<feature type="helix" evidence="69">
    <location>
        <begin position="435"/>
        <end position="437"/>
    </location>
</feature>
<feature type="turn" evidence="69">
    <location>
        <begin position="442"/>
        <end position="446"/>
    </location>
</feature>
<feature type="helix" evidence="69">
    <location>
        <begin position="448"/>
        <end position="450"/>
    </location>
</feature>
<feature type="helix" evidence="69">
    <location>
        <begin position="453"/>
        <end position="458"/>
    </location>
</feature>
<feature type="turn" evidence="69">
    <location>
        <begin position="463"/>
        <end position="465"/>
    </location>
</feature>
<feature type="helix" evidence="69">
    <location>
        <begin position="474"/>
        <end position="494"/>
    </location>
</feature>